<sequence length="1274" mass="140762">MPEPGKKPVSAFSKKPRSVEVAAGSPAVFEAETERAGVKVRWQRGGSDISASNKYGLATEGTRHTLTVREVGPADQGSYAVIAGSSKVKFDLKVIEAEKAEPMLAPAPAPAEATGAPGEAPAPAAELGESAPSPKGSSSAALNGPTPGAPDDPIGLFVMRPQDGEVTVGGSITFSARVAGASLLKPPVVKWFKGKWVDLSSKVGQHLQLHDSYDRASKVYLFELHITDAQPAFTGSYRCEVSTKDKFDCSNFNLTVHEAMGTGDLDLLSAFRRTSLAGGGRRISDSHEDTGILDFSSLLKKRDSFRTPRDSKLEAPAEEDVWEILRQAPPSEYERIAFQYGVTDLRGMLKRLKGMRRDEKKSTAFQKKLEPAYQVSKGHKIRLTVELADHDAEVKWLKNGQEIQMSGSKYIFESIGAKRTLTISQCSLADDAAYQCVVGGEKCSTELFVKEPPVLITRPLEDQLVMVGQRVEFECEVSEEGAQVKWLKDGVELTREETFKYRFKKDGQRHHLIINEAMLEDAGHYALCTSGGQALAELIVQEKKLEVYQSIADLMVGAKDQAVFKCEVSDENVRGVWLKNGKELVPDSRIKVSHIGRVHKLTIDDVTPADEADYSFVPEGFACNLSAKLHFMEVKIDFVPRQEPPKIHLDCPGRIPDTIVVVAGNKLRLDVPISGDPAPTVIWQKAITQGNKAPARPAPDAPEDTGDSDEWVFDKKLLCETEGRVRVETTKDRSIFTVEGAEKEDEGVYTVTVKNPVGEDQVNLTVKVIDVPDAPAAPKISNVGEDSCTVQWEPPAYDGGQPILGYILERKKKKSYRWMRLNFDLIQELSHEARRMIEGVVYEMRVYAVNAIGMSRPSPASQPFMPIGPPSEPTHLAVEDVSDTTVSLKWRPPERVGAGGLDGYSVEYCPEGCSEWVAALQGLTEHTSILVKDLPTGARLLFRVRAHNMAGPGAPVTTTEPVTVQEILQRPRLQLPRHLRQTIQKKVGEPVNLLIPFQGKPRPQVTWTKEGQPLAGEEVSIRNSPTDTILFIRAARRVHSGTYQVTVRIENMEDKATLVLQVVDKPSPPQDLRVTDAWGLNVALEWKPPQDVGNTELWGYTVQKADKKTMEWFTVLEHYRRTHCVVPELIIGNGYYFRVFSQNMVGFSDRAATTKEPVFIPRPGITYEPPNYKALDFSEAPSFTQPLVNRSVIAGYTAMLCCAVRGSPKPKISWFKNGLDLGEDARFRMFSKQGVLTLEIRKPCPFDGGIYVCRATNLQGEARCECRLEVRVPQ</sequence>
<organism>
    <name type="scientific">Homo sapiens</name>
    <name type="common">Human</name>
    <dbReference type="NCBI Taxonomy" id="9606"/>
    <lineage>
        <taxon>Eukaryota</taxon>
        <taxon>Metazoa</taxon>
        <taxon>Chordata</taxon>
        <taxon>Craniata</taxon>
        <taxon>Vertebrata</taxon>
        <taxon>Euteleostomi</taxon>
        <taxon>Mammalia</taxon>
        <taxon>Eutheria</taxon>
        <taxon>Euarchontoglires</taxon>
        <taxon>Primates</taxon>
        <taxon>Haplorrhini</taxon>
        <taxon>Catarrhini</taxon>
        <taxon>Hominidae</taxon>
        <taxon>Homo</taxon>
    </lineage>
</organism>
<keyword id="KW-0002">3D-structure</keyword>
<keyword id="KW-0007">Acetylation</keyword>
<keyword id="KW-0009">Actin-binding</keyword>
<keyword id="KW-0025">Alternative splicing</keyword>
<keyword id="KW-0122">Cardiomyopathy</keyword>
<keyword id="KW-0130">Cell adhesion</keyword>
<keyword id="KW-0225">Disease variant</keyword>
<keyword id="KW-1015">Disulfide bond</keyword>
<keyword id="KW-0393">Immunoglobulin domain</keyword>
<keyword id="KW-0479">Metal-binding</keyword>
<keyword id="KW-0488">Methylation</keyword>
<keyword id="KW-0514">Muscle protein</keyword>
<keyword id="KW-0597">Phosphoprotein</keyword>
<keyword id="KW-1267">Proteomics identification</keyword>
<keyword id="KW-1185">Reference proteome</keyword>
<keyword id="KW-0677">Repeat</keyword>
<keyword id="KW-0787">Thick filament</keyword>
<keyword id="KW-0832">Ubl conjugation</keyword>
<keyword id="KW-0862">Zinc</keyword>
<protein>
    <recommendedName>
        <fullName>Myosin-binding protein C, cardiac-type</fullName>
        <shortName>Cardiac MyBP-C</shortName>
    </recommendedName>
    <alternativeName>
        <fullName>C-protein, cardiac muscle isoform</fullName>
    </alternativeName>
</protein>
<accession>Q14896</accession>
<accession>A5PL00</accession>
<accession>Q16410</accession>
<accession>Q6R2F7</accession>
<accession>Q9UE27</accession>
<accession>Q9UM53</accession>
<name>MYPC3_HUMAN</name>
<reference key="1">
    <citation type="journal article" date="1995" name="EMBO J.">
        <title>Phosphorylation switches specific for the cardiac isoform of myosin binding protein-C: a modulator of cardiac contraction?</title>
        <authorList>
            <person name="Gautel M."/>
            <person name="Zuffardi O."/>
            <person name="Freiburg A."/>
            <person name="Labeit S."/>
        </authorList>
    </citation>
    <scope>NUCLEOTIDE SEQUENCE [MRNA]</scope>
    <scope>VARIANT CMH4 GLN-820</scope>
    <source>
        <tissue>Heart</tissue>
    </source>
</reference>
<reference key="2">
    <citation type="journal article" date="1997" name="Circ. Res.">
        <title>Organization and sequence of human cardiac myosin binding protein C gene (MYBPC3) and identification of mutations predicted to produce truncated proteins in familial hypertrophic cardiomyopathy.</title>
        <authorList>
            <person name="Carrier L."/>
            <person name="Bonne G."/>
            <person name="Bahrend E."/>
            <person name="Yu B."/>
            <person name="Richard P."/>
            <person name="Niel F."/>
            <person name="Hainque B."/>
            <person name="Cruaud C."/>
            <person name="Gary F."/>
            <person name="Labeit S."/>
            <person name="Bouhour J.-B."/>
            <person name="Dubourg O."/>
            <person name="Desnos M."/>
            <person name="Hagege A.A."/>
            <person name="Trent R.J."/>
            <person name="Komajda M."/>
            <person name="Fiszman M."/>
            <person name="Schwartz K."/>
        </authorList>
    </citation>
    <scope>NUCLEOTIDE SEQUENCE [GENOMIC DNA]</scope>
    <scope>VARIANTS CMH4 GLN-542 AND GLN-820</scope>
</reference>
<reference key="3">
    <citation type="journal article" date="1998" name="N. Engl. J. Med.">
        <title>Mutations in the gene for cardiac myosin-binding protein C and late-onset familial hypertrophic cardiomyopathy.</title>
        <authorList>
            <person name="Niimura H."/>
            <person name="Bachinski L.L."/>
            <person name="Sangwatanaroj S."/>
            <person name="Watkins H."/>
            <person name="Chudley A.E."/>
            <person name="McKenna W."/>
            <person name="Kristinsson A."/>
            <person name="Roberts R."/>
            <person name="Sole M."/>
            <person name="Maron B.J."/>
            <person name="Seidman J.G."/>
            <person name="Seidman C.E."/>
        </authorList>
    </citation>
    <scope>NUCLEOTIDE SEQUENCE [GENOMIC DNA]</scope>
    <scope>VARIANTS CMH4 GLN-451; GLN-495 AND GLN-502</scope>
</reference>
<reference key="4">
    <citation type="submission" date="2004-01" db="EMBL/GenBank/DDBJ databases">
        <authorList>
            <consortium name="NIEHS SNPs program"/>
        </authorList>
    </citation>
    <scope>NUCLEOTIDE SEQUENCE [GENOMIC DNA]</scope>
    <scope>VARIANTS MET-158; ILE-189; GLY-236; GLN-281; TRP-382; VAL-383; THR-522; VAL-833; GLU-998 AND CYS-1048</scope>
</reference>
<reference key="5">
    <citation type="submission" date="2009-11" db="EMBL/GenBank/DDBJ databases">
        <authorList>
            <person name="Rieder M.J."/>
            <person name="Bertucci C."/>
            <person name="Stanaway I.B."/>
            <person name="Johnson E.J."/>
            <person name="Swanson J.E."/>
            <person name="Siegel D.L."/>
            <person name="da Ponte S.H."/>
            <person name="Igartua C."/>
            <person name="Patterson K."/>
            <person name="Nickerson D.A."/>
        </authorList>
    </citation>
    <scope>NUCLEOTIDE SEQUENCE [GENOMIC DNA]</scope>
</reference>
<reference key="6">
    <citation type="journal article" date="2006" name="Nature">
        <title>Human chromosome 11 DNA sequence and analysis including novel gene identification.</title>
        <authorList>
            <person name="Taylor T.D."/>
            <person name="Noguchi H."/>
            <person name="Totoki Y."/>
            <person name="Toyoda A."/>
            <person name="Kuroki Y."/>
            <person name="Dewar K."/>
            <person name="Lloyd C."/>
            <person name="Itoh T."/>
            <person name="Takeda T."/>
            <person name="Kim D.-W."/>
            <person name="She X."/>
            <person name="Barlow K.F."/>
            <person name="Bloom T."/>
            <person name="Bruford E."/>
            <person name="Chang J.L."/>
            <person name="Cuomo C.A."/>
            <person name="Eichler E."/>
            <person name="FitzGerald M.G."/>
            <person name="Jaffe D.B."/>
            <person name="LaButti K."/>
            <person name="Nicol R."/>
            <person name="Park H.-S."/>
            <person name="Seaman C."/>
            <person name="Sougnez C."/>
            <person name="Yang X."/>
            <person name="Zimmer A.R."/>
            <person name="Zody M.C."/>
            <person name="Birren B.W."/>
            <person name="Nusbaum C."/>
            <person name="Fujiyama A."/>
            <person name="Hattori M."/>
            <person name="Rogers J."/>
            <person name="Lander E.S."/>
            <person name="Sakaki Y."/>
        </authorList>
    </citation>
    <scope>NUCLEOTIDE SEQUENCE [LARGE SCALE GENOMIC DNA]</scope>
</reference>
<reference key="7">
    <citation type="journal article" date="2004" name="Genome Res.">
        <title>The status, quality, and expansion of the NIH full-length cDNA project: the Mammalian Gene Collection (MGC).</title>
        <authorList>
            <consortium name="The MGC Project Team"/>
        </authorList>
    </citation>
    <scope>NUCLEOTIDE SEQUENCE [LARGE SCALE MRNA]</scope>
</reference>
<reference key="8">
    <citation type="journal article" date="1995" name="Nat. Genet.">
        <title>Cardiac myosin binding protein-C gene splice acceptor site mutation is associated with familial hypertrophic cardiomyopathy.</title>
        <authorList>
            <person name="Bonne G."/>
            <person name="Carrier L."/>
            <person name="Bercovici J."/>
            <person name="Cruaud C."/>
            <person name="Richard P."/>
            <person name="Hainque B."/>
            <person name="Gautel M."/>
            <person name="Labeit S."/>
            <person name="James M."/>
            <person name="Beckmann J."/>
            <person name="Weissenbach J."/>
            <person name="Vosberg H.-P."/>
            <person name="Fiszman M."/>
            <person name="Komajda M."/>
            <person name="Schwartz K."/>
        </authorList>
    </citation>
    <scope>NUCLEOTIDE SEQUENCE [MRNA] OF 640-694</scope>
</reference>
<reference key="9">
    <citation type="journal article" date="2003" name="J. Mol. Biol.">
        <title>Structure, stability and dynamics of the central domain of cardiac myosin binding protein C (MyBP-C): implications for multidomain assembly and causes for cardiomyopathy.</title>
        <authorList>
            <person name="Idowu S.M."/>
            <person name="Gautel M."/>
            <person name="Perkins S.J."/>
            <person name="Pfuhl M."/>
        </authorList>
    </citation>
    <scope>STRUCTURE BY NMR OF 641-770</scope>
    <scope>CHARACTERIZATION OF VARIANTS HIS-654 AND LYS-755</scope>
</reference>
<reference key="10">
    <citation type="journal article" date="2004" name="J. Biomol. NMR">
        <title>Sequence specific assignment of domain C1 of the N-terminal myosin-binding site of human cardiac myosin binding protein C (MyBP-C).</title>
        <authorList>
            <person name="Ababou A."/>
            <person name="Zhou L."/>
            <person name="Gautel M."/>
            <person name="Pfuhl M."/>
        </authorList>
    </citation>
    <scope>STRUCTURE BY NMR OF 358-450</scope>
    <scope>DISULFIDE BOND</scope>
</reference>
<reference key="11">
    <citation type="journal article" date="2008" name="Acta Crystallogr. D">
        <title>An investigation into the protonation states of the C1 domain of cardiac myosin-binding protein C.</title>
        <authorList>
            <person name="Fisher S.J."/>
            <person name="Helliwell J.R."/>
            <person name="Khurshid S."/>
            <person name="Govada L."/>
            <person name="Redwood C."/>
            <person name="Squire J.M."/>
            <person name="Chayen N.E."/>
        </authorList>
    </citation>
    <scope>X-RAY CRYSTALLOGRAPHY (1.3 ANGSTROMS) OF 151-258</scope>
</reference>
<reference key="12">
    <citation type="journal article" date="2008" name="J. Mol. Biol.">
        <title>Crystal structure of the C1 domain of cardiac myosin binding protein-C: implications for hypertrophic cardiomyopathy.</title>
        <authorList>
            <person name="Govada L."/>
            <person name="Carpenter L."/>
            <person name="da Fonseca P.C."/>
            <person name="Helliwell J.R."/>
            <person name="Rizkallah P."/>
            <person name="Flashman E."/>
            <person name="Chayen N.E."/>
            <person name="Redwood C."/>
            <person name="Squire J.M."/>
        </authorList>
    </citation>
    <scope>X-RAY CRYSTALLOGRAPHY (1.55 ANGSTROMS) OF 151-258</scope>
</reference>
<reference key="13">
    <citation type="journal article" date="2008" name="J. Mol. Biol.">
        <title>Myosin binding protein C positioned to play a key role in regulation of muscle contraction: structure and interactions of domain C1.</title>
        <authorList>
            <person name="Ababou A."/>
            <person name="Rostkova E."/>
            <person name="Mistry S."/>
            <person name="Le Masurier C."/>
            <person name="Gautel M."/>
            <person name="Pfuhl M."/>
        </authorList>
    </citation>
    <scope>STRUCTURE BY NMR OF 151-260</scope>
    <scope>ZINC-BINDING SITE</scope>
</reference>
<reference key="14">
    <citation type="journal article" date="1998" name="J. Med. Genet.">
        <title>Molecular pathology of familial hypertrophic cardiomyopathy caused by mutations in the cardiac myosin binding protein C gene.</title>
        <authorList>
            <person name="Yu B."/>
            <person name="French J.A."/>
            <person name="Carrier L."/>
            <person name="Jeremy R.W."/>
            <person name="McTaggart D.R."/>
            <person name="Nicholson M.R."/>
            <person name="Hambly B."/>
            <person name="Semsarian C."/>
            <person name="Richmond D.R."/>
            <person name="Schwartz K."/>
            <person name="Trent R.J."/>
        </authorList>
    </citation>
    <scope>VARIANT CMH4 LYS-755</scope>
</reference>
<reference key="15">
    <citation type="journal article" date="1998" name="J. Med. Genet.">
        <title>Identification of a new missense mutation in MyBP-C associated with hypertrophic cardiomyopathy.</title>
        <authorList>
            <person name="Moolman-Smook J.C."/>
            <person name="Mayosi B."/>
            <person name="Brink P."/>
            <person name="Corfield V.A."/>
        </authorList>
    </citation>
    <scope>VARIANT CMH4 HIS-654</scope>
</reference>
<reference key="16">
    <citation type="journal article" date="1999" name="Am. J. Hum. Genet.">
        <title>The origins of hypertrophic cardiomyopathy-causing mutations in two South African subpopulations: a unique profile of both independent and founder events.</title>
        <authorList>
            <person name="Moolman-Smook J.C."/>
            <person name="De Lange W.J."/>
            <person name="Bruwer E.C.D."/>
            <person name="Brink P.A."/>
            <person name="Corfield V.A."/>
        </authorList>
    </citation>
    <scope>VARIANT MET-896</scope>
</reference>
<reference key="17">
    <citation type="journal article" date="2001" name="J. Am. Coll. Cardiol.">
        <title>Development of left ventricular hypertrophy in adults in hypertrophic cardiomyopathy caused by cardiac myosin-binding protein C gene mutations.</title>
        <authorList>
            <person name="Maron B.J."/>
            <person name="Niimura H."/>
            <person name="Casey S.A."/>
            <person name="Soper M.K."/>
            <person name="Wright G.B."/>
            <person name="Seidman J.G."/>
            <person name="Seidman C.E."/>
        </authorList>
    </citation>
    <scope>VARIANT CMH4 GLN-495</scope>
    <scope>VARIANT GLN-326</scope>
</reference>
<reference key="18">
    <citation type="journal article" date="2001" name="J. Am. Coll. Cardiol.">
        <title>Spectrum of clinical phenotypes and gene variants in cardiac myosin-binding protein C mutation carriers with hypertrophic cardiomyopathy.</title>
        <authorList>
            <person name="Erdmann J."/>
            <person name="Raible J."/>
            <person name="Maki-Abadi J."/>
            <person name="Hummel M."/>
            <person name="Hammann J."/>
            <person name="Wollnik B."/>
            <person name="Frantz E."/>
            <person name="Fleck E."/>
            <person name="Hetzer R."/>
            <person name="Regitz-Zagrosek V."/>
        </authorList>
    </citation>
    <scope>VARIANTS CMH4 TRP-282; ARG-507; ARG-566 AND ILE-1115</scope>
</reference>
<reference key="19">
    <citation type="journal article" date="2002" name="Biochem. Biophys. Res. Commun.">
        <title>Novel mutations in sarcomeric protein genes in dilated cardiomyopathy.</title>
        <authorList>
            <person name="Daehmlow S."/>
            <person name="Erdmann J."/>
            <person name="Knueppel T."/>
            <person name="Gille C."/>
            <person name="Froemmel C."/>
            <person name="Hummel M."/>
            <person name="Hetzer R."/>
            <person name="Regitz-Zagrosek V."/>
        </authorList>
    </citation>
    <scope>VARIANT CMH4 THR-948</scope>
    <scope>VARIANTS GLY-236 AND GLN-326</scope>
</reference>
<reference key="20">
    <citation type="journal article" date="2002" name="Circulation">
        <title>Sarcomere protein gene mutations in hypertrophic cardiomyopathy of the elderly.</title>
        <authorList>
            <person name="Niimura H."/>
            <person name="Patton K.K."/>
            <person name="McKenna W.J."/>
            <person name="Soults J."/>
            <person name="Maron B.J."/>
            <person name="Seidman J.G."/>
            <person name="Seidman C.E."/>
        </authorList>
    </citation>
    <scope>VARIANTS CMH4 ALA-59 AND GLN-1002</scope>
    <scope>VARIANT GLN-326</scope>
</reference>
<reference key="21">
    <citation type="journal article" date="2002" name="J. Mol. Med.">
        <title>Mutations in the cardiac myosin-binding protein C gene are the predominant cause of familial hypertrophic cardiomyopathy in eastern Finland.</title>
        <authorList>
            <person name="Jaeaeskelaeinen P."/>
            <person name="Kuusisto J."/>
            <person name="Miettinen R."/>
            <person name="Kaerkkaeinen P."/>
            <person name="Kaerkkaeinen S."/>
            <person name="Heikkinen S."/>
            <person name="Peltola P."/>
            <person name="Pihlajamaeki J."/>
            <person name="Vauhkonen I."/>
            <person name="Laakso M."/>
        </authorList>
    </citation>
    <scope>VARIANTS LEU-147; GLY-236; GLN-326; MET-896 AND HIS-1138</scope>
</reference>
<reference key="22">
    <citation type="journal article" date="2003" name="Biochem. Biophys. Res. Commun.">
        <title>Hypertrophic cardiomyopathy: two homozygous cases with 'typical' hypertrophic cardiomyopathy and three new mutations in cases with progression to dilated cardiomyopathy.</title>
        <authorList>
            <person name="Nanni L."/>
            <person name="Pieroni M."/>
            <person name="Chimenti C."/>
            <person name="Simionati B."/>
            <person name="Zimbello R."/>
            <person name="Maseri A."/>
            <person name="Frustaci A."/>
            <person name="Lanfranchi G."/>
        </authorList>
    </citation>
    <scope>VARIANTS CMH4 LYS-258; HIS-810; GLN-820 AND HIS-873</scope>
</reference>
<reference key="23">
    <citation type="journal article" date="2003" name="Circulation">
        <title>Hypertrophic cardiomyopathy: distribution of disease genes, spectrum of mutations, and implications for a molecular diagnosis strategy.</title>
        <authorList>
            <person name="Richard P."/>
            <person name="Charron P."/>
            <person name="Carrier L."/>
            <person name="Ledeuil C."/>
            <person name="Cheav T."/>
            <person name="Pichereau C."/>
            <person name="Benaiche A."/>
            <person name="Isnard R."/>
            <person name="Dubourg O."/>
            <person name="Burban M."/>
            <person name="Gueffet J.-P."/>
            <person name="Millaire A."/>
            <person name="Desnos M."/>
            <person name="Schwartz K."/>
            <person name="Hainque B."/>
            <person name="Komajda M."/>
        </authorList>
    </citation>
    <scope>VARIANTS CMH4 PRO-257; LYS-258; GLU-278; ALA-279; PRO-352; TRP-502; LYS-504 DEL; GLN-542; ARG-811; VAL-833; THR-1194 AND THR-1255</scope>
    <scope>VARIANTS GLN-326 AND MET-896</scope>
</reference>
<reference key="24">
    <citation type="journal article" date="2004" name="Circulation">
        <authorList>
            <person name="Richard P."/>
            <person name="Charron P."/>
            <person name="Carrier L."/>
            <person name="Ledeuil C."/>
            <person name="Cheav T."/>
            <person name="Pichereau C."/>
            <person name="Benaiche A."/>
            <person name="Isnard R."/>
            <person name="Dubourg O."/>
            <person name="Burban M."/>
            <person name="Gueffet J.-P."/>
            <person name="Millaire A."/>
            <person name="Desnos M."/>
            <person name="Schwartz K."/>
            <person name="Hainque B."/>
            <person name="Komajda M."/>
        </authorList>
    </citation>
    <scope>ERRATUM OF PUBMED:12707239</scope>
</reference>
<reference key="25">
    <citation type="journal article" date="2003" name="Clin. Genet.">
        <title>Mutation spectrum in a large cohort of unrelated consecutive patients with hypertrophic cardiomyopathy.</title>
        <authorList>
            <person name="Erdmann J."/>
            <person name="Daehmlow S."/>
            <person name="Wischke S."/>
            <person name="Senyuva M."/>
            <person name="Werner U."/>
            <person name="Raible J."/>
            <person name="Tanis N."/>
            <person name="Dyachenko S."/>
            <person name="Hummel M."/>
            <person name="Hetzer R."/>
            <person name="Regitz-Zagrosek V."/>
        </authorList>
    </citation>
    <scope>VARIANTS CMH4 LYS-258; TRP-282; ARG-507; TRP-523; ARG-566; PRO-668; VAL-833 AND ILE-1115</scope>
    <scope>VARIANTS GLY-236 AND GLN-326</scope>
</reference>
<reference key="26">
    <citation type="journal article" date="2003" name="Eur. Heart J.">
        <title>The 2373insG mutation in the MYBPC3 gene is a founder mutation, which accounts for nearly one-fourth of the HCM cases in the Netherlands.</title>
        <authorList>
            <person name="Alders M."/>
            <person name="Jongbloed R."/>
            <person name="Deelen W."/>
            <person name="van den Wijngaard A."/>
            <person name="Doevendans P."/>
            <person name="Ten Cate F."/>
            <person name="Regitz-Zagrosek V."/>
            <person name="Vosberg H.-P."/>
            <person name="van Langen I."/>
            <person name="Wilde A."/>
            <person name="Dooijes D."/>
            <person name="Mannens M."/>
        </authorList>
    </citation>
    <scope>VARIANTS CMH4 SER-161; LYS-258; ASN-605; THR-833; TRP-834 AND THR-1131</scope>
</reference>
<reference key="27">
    <citation type="journal article" date="2003" name="J. Am. Coll. Cardiol.">
        <title>A novel missense mutation in the myosin binding protein-C gene is responsible for hypertrophic cardiomyopathy with left ventricular dysfunction and dilation in elderly patients.</title>
        <authorList>
            <person name="Konno T."/>
            <person name="Shimizu M."/>
            <person name="Ino H."/>
            <person name="Matsuyama T."/>
            <person name="Yamaguchi M."/>
            <person name="Terai H."/>
            <person name="Hayashi K."/>
            <person name="Mabuchi T."/>
            <person name="Kiyama M."/>
            <person name="Sakata K."/>
            <person name="Hayashi T."/>
            <person name="Inoue M."/>
            <person name="Kaneda T."/>
            <person name="Mabuchi H."/>
        </authorList>
    </citation>
    <scope>VARIANT CMH4 GLN-820</scope>
</reference>
<reference key="28">
    <citation type="journal article" date="2003" name="J. Mol. Cell. Cardiol.">
        <title>Identification of the genotypes causing hypertrophic cardiomyopathy in northern Sweden.</title>
        <authorList>
            <person name="Moerner S."/>
            <person name="Richard P."/>
            <person name="Kazzam E."/>
            <person name="Hellman U."/>
            <person name="Hainque B."/>
            <person name="Schwartz K."/>
            <person name="Waldenstroem A."/>
        </authorList>
    </citation>
    <scope>VARIANTS CMH4 SER-237; HIS-668 AND THR-833</scope>
    <scope>VARIANTS GLN-326 AND MET-896</scope>
</reference>
<reference key="29">
    <citation type="journal article" date="2004" name="Eur. J. Hum. Genet.">
        <title>Genetic and phenotypic characterization of mutations in myosin-binding protein C (MYBPC3) in 81 families with familial hypertrophic cardiomyopathy: total or partial haploinsufficiency.</title>
        <authorList>
            <person name="Andersen P.S."/>
            <person name="Havndrup O."/>
            <person name="Bundgaard H."/>
            <person name="Larsen L.A."/>
            <person name="Vuust J."/>
            <person name="Pedersen A.K."/>
            <person name="Kjeldsen K."/>
            <person name="Christiansen M."/>
        </authorList>
    </citation>
    <scope>VARIANTS CMH4 ASN-228; LYS-258; LYS-813 DEL AND THR-833</scope>
</reference>
<reference key="30">
    <citation type="journal article" date="2004" name="J. Am. Coll. Cardiol.">
        <title>Myosin binding protein C mutations and compound heterozygosity in hypertrophic cardiomyopathy.</title>
        <authorList>
            <person name="Van Driest S.L."/>
            <person name="Vasile V.C."/>
            <person name="Ommen S.R."/>
            <person name="Will M.L."/>
            <person name="Tajik A.J."/>
            <person name="Gersh B.J."/>
            <person name="Ackerman M.J."/>
        </authorList>
    </citation>
    <scope>VARIANTS CMH4 ARG-5; LEU-219; ILE-256; LYS-258; HIS-458; ARG-490; GLN-495; TRP-502; GLN-542; VAL-604; ASN-605; LEU-608; CYS-733; ASN-770; ARG-792; HIS-810; LYS-811 DEL; THR-833; GLU-998; ARG-998; ILE-1113 AND THR-1131</scope>
    <scope>VARIANTS MET-158; GLY-236; GLN-326; TRP-382; SER-416; ARG-507; MET-545 AND MET-896</scope>
</reference>
<reference key="31">
    <citation type="journal article" date="2004" name="J. Am. Coll. Cardiol.">
        <title>Tcap gene mutations in hypertrophic cardiomyopathy and dilated cardiomyopathy.</title>
        <authorList>
            <person name="Hayashi T."/>
            <person name="Arimura T."/>
            <person name="Itoh-Satoh M."/>
            <person name="Ueda K."/>
            <person name="Hohda S."/>
            <person name="Inagaki N."/>
            <person name="Takahashi M."/>
            <person name="Hori H."/>
            <person name="Yasunami M."/>
            <person name="Nishi H."/>
            <person name="Koga Y."/>
            <person name="Nakamura H."/>
            <person name="Matsuzaki M."/>
            <person name="Choi B.Y."/>
            <person name="Bae S.W."/>
            <person name="You C.W."/>
            <person name="Han K.H."/>
            <person name="Park J.E."/>
            <person name="Knoell R."/>
            <person name="Hoshijima M."/>
            <person name="Chien K.R."/>
            <person name="Kimura A."/>
        </authorList>
    </citation>
    <scope>VARIANT GLY-236</scope>
</reference>
<reference key="32">
    <citation type="journal article" date="2005" name="Clin. Chim. Acta">
        <title>Mutations profile in Chinese patients with hypertrophic cardiomyopathy.</title>
        <authorList>
            <person name="Song L."/>
            <person name="Zou Y."/>
            <person name="Wang J."/>
            <person name="Wang Z."/>
            <person name="Zhen Y."/>
            <person name="Lou K."/>
            <person name="Zhang Q."/>
            <person name="Wang X."/>
            <person name="Wang H."/>
            <person name="Li J."/>
            <person name="Hui R."/>
        </authorList>
    </citation>
    <scope>VARIANTS CMH4 LYS-258; ARG-263; SER-417; HIS-669 AND ASP-759</scope>
</reference>
<reference key="33">
    <citation type="journal article" date="2005" name="Int. J. Cardiol.">
        <title>Hypertrophic cardiomyopathy linked to homozygosity for a new mutation in the myosin-binding protein C gene (A627V) suggests a dosage effect.</title>
        <authorList>
            <person name="Garcia-Castro M."/>
            <person name="Reguero J.R."/>
            <person name="Alvarez V."/>
            <person name="Batalla A."/>
            <person name="Soto M.I."/>
            <person name="Albaladejo V."/>
            <person name="Coto E."/>
        </authorList>
    </citation>
    <scope>VARIANT GLY-236</scope>
    <scope>VARIANTS CMH4 ASP-342; VAL-627 AND MET-771</scope>
</reference>
<reference key="34">
    <citation type="journal article" date="2005" name="J. Med. Genet.">
        <title>Compound and double mutations in patients with hypertrophic cardiomyopathy: implications for genetic testing and counselling.</title>
        <authorList>
            <person name="Ingles J."/>
            <person name="Doolan A."/>
            <person name="Chiu C."/>
            <person name="Seidman J."/>
            <person name="Seidman C."/>
            <person name="Semsarian C."/>
        </authorList>
    </citation>
    <scope>VARIANTS CMH4 HIS-273; TRP-502 AND GLN-542</scope>
    <scope>VARIANT GLN-326</scope>
</reference>
<reference key="35">
    <citation type="journal article" date="2008" name="BMC Med. Genet.">
        <title>Adverse events in families with hypertrophic or dilated cardiomyopathy and mutations in the MYBPC3 gene.</title>
        <authorList>
            <person name="Ehlermann P."/>
            <person name="Weichenhan D."/>
            <person name="Zehelein J."/>
            <person name="Steen H."/>
            <person name="Pribe R."/>
            <person name="Zeller R."/>
            <person name="Lehrke S."/>
            <person name="Zugck C."/>
            <person name="Ivandic B.T."/>
            <person name="Katus H.A."/>
        </authorList>
    </citation>
    <scope>VARIANTS CMH4 LYS-258; CYS-272; VAL-336; GLN-495; GLN-502; SER-957 AND ILE-958</scope>
</reference>
<reference key="36">
    <citation type="journal article" date="2008" name="J. Mol. Biol.">
        <title>Ubiquitin-proteasome system impairment caused by a missense cardiac myosin-binding protein C mutation and associated with cardiac dysfunction in hypertrophic cardiomyopathy.</title>
        <authorList>
            <person name="Bahrudin U."/>
            <person name="Morisaki H."/>
            <person name="Morisaki T."/>
            <person name="Ninomiya H."/>
            <person name="Higaki K."/>
            <person name="Nanba E."/>
            <person name="Igawa O."/>
            <person name="Takashima S."/>
            <person name="Mizuta E."/>
            <person name="Miake J."/>
            <person name="Yamamoto Y."/>
            <person name="Shirayoshi Y."/>
            <person name="Kitakaze M."/>
            <person name="Carrier L."/>
            <person name="Hisatome I."/>
        </authorList>
    </citation>
    <scope>VARIANTS CMH4 LYS-334; LYS-814 DEL; GLU-998 AND MET-1046</scope>
    <scope>CHARACTERIZATION OF VARIANTS CMH4 LYS-334; LYS-814 DEL; GLU-998 AND MET-1046</scope>
    <scope>VARIANT GLY-236</scope>
    <scope>UBIQUITINATION</scope>
</reference>
<reference key="37">
    <citation type="journal article" date="2008" name="N. Engl. J. Med.">
        <title>Shared genetic causes of cardiac hypertrophy in children and adults.</title>
        <authorList>
            <person name="Morita H."/>
            <person name="Rehm H.L."/>
            <person name="Menesses A."/>
            <person name="McDonough B."/>
            <person name="Roberts A.E."/>
            <person name="Kucherlapati R."/>
            <person name="Towbin J.A."/>
            <person name="Seidman J.G."/>
            <person name="Seidman C.E."/>
        </authorList>
    </citation>
    <scope>VARIANTS CMH4 GLU-278; ARG-490; GLY-495; GLN-502; TRP-502; ASN-605; SER-1028 AND ARG-1248</scope>
    <scope>VARIANTS MET-158; GLY-236; GLN-326; MET-896 AND TRP-1002</scope>
</reference>
<reference key="38">
    <citation type="journal article" date="2010" name="Circ. Cardiovasc. Genet.">
        <title>Coding sequence rare variants identified in MYBPC3, MYH6, TPM1, TNNC1, and TNNI3 from 312 patients with familial or idiopathic dilated cardiomyopathy.</title>
        <authorList>
            <person name="Hershberger R.E."/>
            <person name="Norton N."/>
            <person name="Morales A."/>
            <person name="Li D."/>
            <person name="Siegfried J.D."/>
            <person name="Gonzalez-Quintana J."/>
        </authorList>
    </citation>
    <scope>VARIANTS CMD1MM ARG-490; THR-833 AND PHE-1264</scope>
</reference>
<reference key="39">
    <citation type="journal article" date="2011" name="Circ. Cardiovasc. Genet.">
        <title>Sarcomere gene mutations in isolated left ventricular noncompaction cardiomyopathy do not predict clinical phenotype.</title>
        <authorList>
            <person name="Probst S."/>
            <person name="Oechslin E."/>
            <person name="Schuler P."/>
            <person name="Greutmann M."/>
            <person name="Boye P."/>
            <person name="Knirsch W."/>
            <person name="Berger F."/>
            <person name="Thierfelder L."/>
            <person name="Jenni R."/>
            <person name="Klaassen S."/>
        </authorList>
    </citation>
    <scope>VARIANTS LVNC10 ARG-490 AND LEU-873</scope>
</reference>
<reference key="40">
    <citation type="journal article" date="2013" name="PLoS ONE">
        <title>Autosomal recessive transmission of MYBPC3 mutation results in malignant phenotype of hypertrophic cardiomyopathy.</title>
        <authorList>
            <person name="Wang Y."/>
            <person name="Wang Z."/>
            <person name="Yang Q."/>
            <person name="Zou Y."/>
            <person name="Zhang H."/>
            <person name="Yan C."/>
            <person name="Feng X."/>
            <person name="Chen Y."/>
            <person name="Zhang Y."/>
            <person name="Wang J."/>
            <person name="Zhou X."/>
            <person name="Ahmad F."/>
            <person name="Hui R."/>
            <person name="Song L."/>
        </authorList>
    </citation>
    <scope>VARIANT CMH4 VAL-490</scope>
</reference>
<reference key="41">
    <citation type="journal article" date="2015" name="J. Am. Heart Assoc.">
        <title>Novel phenotype-genotype correlations of restrictive cardiomyopathy with myosin-binding protein C (MYBPC3) gene mutations tested by next-generation sequencing.</title>
        <authorList>
            <person name="Wu W."/>
            <person name="Lu C.X."/>
            <person name="Wang Y.N."/>
            <person name="Liu F."/>
            <person name="Chen W."/>
            <person name="Liu Y.T."/>
            <person name="Han Y.C."/>
            <person name="Cao J."/>
            <person name="Zhang S.Y."/>
            <person name="Zhang X."/>
        </authorList>
    </citation>
    <scope>INVOLVEMENT IN RCM</scope>
    <scope>VARIANT LYS-334</scope>
</reference>
<reference key="42">
    <citation type="journal article" date="2017" name="Clin. Case Rep.">
        <title>Familial hypertrophic cardiomyopathy associated with a new mutation in gene MYBPC3.</title>
        <authorList>
            <person name="Aurensanz Clemente E."/>
            <person name="Ayerza Casas A."/>
            <person name="Garcia Lasheras C."/>
            <person name="Ramos Fuentes F."/>
            <person name="Bueno Martinez I."/>
            <person name="Pelegrin Diaz J."/>
            <person name="Ruiz Frontera P."/>
            <person name="Montserrat Iglesias L."/>
        </authorList>
    </citation>
    <scope>VARIANT CMH4 VAL-562</scope>
</reference>
<comment type="function">
    <text>Thick filament-associated protein located in the crossbridge region of vertebrate striated muscle a bands. In vitro it binds MHC, F-actin and native thin filaments, and modifies the activity of actin-activated myosin ATPase. It may modulate muscle contraction or may play a more structural role.</text>
</comment>
<comment type="interaction">
    <interactant intactId="EBI-704176">
        <id>Q14896</id>
    </interactant>
    <interactant intactId="EBI-704176">
        <id>Q14896</id>
        <label>MYBPC3</label>
    </interactant>
    <organismsDiffer>false</organismsDiffer>
    <experiments>2</experiments>
</comment>
<comment type="interaction">
    <interactant intactId="EBI-704176">
        <id>Q14896</id>
    </interactant>
    <interactant intactId="EBI-10769071">
        <id>Q5VU43-11</id>
        <label>PDE4DIP</label>
    </interactant>
    <organismsDiffer>false</organismsDiffer>
    <experiments>5</experiments>
</comment>
<comment type="alternative products">
    <event type="alternative splicing"/>
    <isoform>
        <id>Q14896-1</id>
        <name>1</name>
        <sequence type="displayed"/>
    </isoform>
    <isoform>
        <id>Q14896-2</id>
        <name>2</name>
        <sequence type="described" ref="VSP_047141"/>
    </isoform>
</comment>
<comment type="PTM">
    <text evidence="1">Substrate for phosphorylation by PKA and PKC. Reversible phosphorylation appears to modulate contraction (By similarity).</text>
</comment>
<comment type="PTM">
    <text evidence="28">Polyubiquitinated.</text>
</comment>
<comment type="disease" evidence="8 9 10 12 13 14 16 17 18 19 20 21 22 24 25 26 28 29 32 34 35 36 37 38 39">
    <disease id="DI-00236">
        <name>Cardiomyopathy, familial hypertrophic, 4</name>
        <acronym>CMH4</acronym>
        <description>A hereditary heart disorder characterized by ventricular hypertrophy, which is usually asymmetric and often involves the interventricular septum. The symptoms include dyspnea, syncope, collapse, palpitations, and chest pain. They can be readily provoked by exercise. The disorder has inter- and intrafamilial variability ranging from benign to malignant forms with high risk of cardiac failure and sudden cardiac death.</description>
        <dbReference type="MIM" id="115197"/>
    </disease>
    <text>The disease is caused by variants affecting the gene represented in this entry.</text>
</comment>
<comment type="disease" evidence="30">
    <disease id="DI-03872">
        <name>Cardiomyopathy, dilated, 1MM</name>
        <acronym>CMD1MM</acronym>
        <description>A disorder characterized by ventricular dilation and impaired systolic function, resulting in congestive heart failure and arrhythmia. Patients are at risk of premature death.</description>
        <dbReference type="MIM" id="615396"/>
    </disease>
    <text>The disease is caused by variants affecting the gene represented in this entry.</text>
</comment>
<comment type="disease">
    <text evidence="33">MYBPC3 mutations may be involved in restrictive cardiomyopathy (RCM), a rare non-ischemic myocardial disease. RCM is characterized by restrictive ventricular-filling physiology in the presence of normal or reduced diastolic and/or systolic volumes (of 1 or both ventricles), biatrial enlargement, and normal ventricular wall thickness.</text>
</comment>
<comment type="disease" evidence="31">
    <disease id="DI-03871">
        <name>Left ventricular non-compaction 10</name>
        <acronym>LVNC10</acronym>
        <description>A form of left ventricular non-compaction, a cardiomyopathy due to myocardial morphogenesis arrest and characterized by a hypertrophic left ventricle, a severely thickened 2-layered myocardium, numerous prominent trabeculations, deep intertrabecular recesses, and poor systolic function. Clinical manifestations are variable. Some affected individuals experience no symptoms at all, others develop heart failure. In some cases, left ventricular non-compaction is associated with other congenital heart anomalies. LVNC10 is an autosomal dominant condition.</description>
        <dbReference type="MIM" id="615396"/>
    </disease>
    <text>The disease is caused by variants affecting the gene represented in this entry.</text>
</comment>
<comment type="similarity">
    <text evidence="41">Belongs to the immunoglobulin superfamily. MyBP family.</text>
</comment>
<gene>
    <name type="primary">MYBPC3</name>
</gene>
<proteinExistence type="evidence at protein level"/>
<evidence type="ECO:0000250" key="1"/>
<evidence type="ECO:0000250" key="2">
    <source>
        <dbReference type="UniProtKB" id="O70468"/>
    </source>
</evidence>
<evidence type="ECO:0000250" key="3">
    <source>
        <dbReference type="UniProtKB" id="P56741"/>
    </source>
</evidence>
<evidence type="ECO:0000255" key="4">
    <source>
        <dbReference type="PROSITE-ProRule" id="PRU00114"/>
    </source>
</evidence>
<evidence type="ECO:0000255" key="5">
    <source>
        <dbReference type="PROSITE-ProRule" id="PRU00316"/>
    </source>
</evidence>
<evidence type="ECO:0000256" key="6">
    <source>
        <dbReference type="SAM" id="MobiDB-lite"/>
    </source>
</evidence>
<evidence type="ECO:0000269" key="7">
    <source>
    </source>
</evidence>
<evidence type="ECO:0000269" key="8">
    <source>
    </source>
</evidence>
<evidence type="ECO:0000269" key="9">
    <source>
    </source>
</evidence>
<evidence type="ECO:0000269" key="10">
    <source>
    </source>
</evidence>
<evidence type="ECO:0000269" key="11">
    <source>
    </source>
</evidence>
<evidence type="ECO:0000269" key="12">
    <source>
    </source>
</evidence>
<evidence type="ECO:0000269" key="13">
    <source>
    </source>
</evidence>
<evidence type="ECO:0000269" key="14">
    <source>
    </source>
</evidence>
<evidence type="ECO:0000269" key="15">
    <source>
    </source>
</evidence>
<evidence type="ECO:0000269" key="16">
    <source>
    </source>
</evidence>
<evidence type="ECO:0000269" key="17">
    <source>
    </source>
</evidence>
<evidence type="ECO:0000269" key="18">
    <source>
    </source>
</evidence>
<evidence type="ECO:0000269" key="19">
    <source>
    </source>
</evidence>
<evidence type="ECO:0000269" key="20">
    <source>
    </source>
</evidence>
<evidence type="ECO:0000269" key="21">
    <source>
    </source>
</evidence>
<evidence type="ECO:0000269" key="22">
    <source>
    </source>
</evidence>
<evidence type="ECO:0000269" key="23">
    <source>
    </source>
</evidence>
<evidence type="ECO:0000269" key="24">
    <source>
    </source>
</evidence>
<evidence type="ECO:0000269" key="25">
    <source>
    </source>
</evidence>
<evidence type="ECO:0000269" key="26">
    <source>
    </source>
</evidence>
<evidence type="ECO:0000269" key="27">
    <source>
    </source>
</evidence>
<evidence type="ECO:0000269" key="28">
    <source>
    </source>
</evidence>
<evidence type="ECO:0000269" key="29">
    <source>
    </source>
</evidence>
<evidence type="ECO:0000269" key="30">
    <source>
    </source>
</evidence>
<evidence type="ECO:0000269" key="31">
    <source>
    </source>
</evidence>
<evidence type="ECO:0000269" key="32">
    <source>
    </source>
</evidence>
<evidence type="ECO:0000269" key="33">
    <source>
    </source>
</evidence>
<evidence type="ECO:0000269" key="34">
    <source>
    </source>
</evidence>
<evidence type="ECO:0000269" key="35">
    <source>
    </source>
</evidence>
<evidence type="ECO:0000269" key="36">
    <source>
    </source>
</evidence>
<evidence type="ECO:0000269" key="37">
    <source>
    </source>
</evidence>
<evidence type="ECO:0000269" key="38">
    <source>
    </source>
</evidence>
<evidence type="ECO:0000269" key="39">
    <source>
    </source>
</evidence>
<evidence type="ECO:0000269" key="40">
    <source ref="4"/>
</evidence>
<evidence type="ECO:0000305" key="41"/>
<evidence type="ECO:0007829" key="42">
    <source>
        <dbReference type="PDB" id="1GXE"/>
    </source>
</evidence>
<evidence type="ECO:0007829" key="43">
    <source>
        <dbReference type="PDB" id="1PD6"/>
    </source>
</evidence>
<evidence type="ECO:0007829" key="44">
    <source>
        <dbReference type="PDB" id="2AVG"/>
    </source>
</evidence>
<evidence type="ECO:0007829" key="45">
    <source>
        <dbReference type="PDB" id="2K1M"/>
    </source>
</evidence>
<evidence type="ECO:0007829" key="46">
    <source>
        <dbReference type="PDB" id="2MQ0"/>
    </source>
</evidence>
<evidence type="ECO:0007829" key="47">
    <source>
        <dbReference type="PDB" id="2MQ3"/>
    </source>
</evidence>
<evidence type="ECO:0007829" key="48">
    <source>
        <dbReference type="PDB" id="3CX2"/>
    </source>
</evidence>
<evidence type="ECO:0007829" key="49">
    <source>
        <dbReference type="PDB" id="5K6P"/>
    </source>
</evidence>
<feature type="chain" id="PRO_0000072693" description="Myosin-binding protein C, cardiac-type">
    <location>
        <begin position="1"/>
        <end position="1274"/>
    </location>
</feature>
<feature type="domain" description="Ig-like C2-type 1">
    <location>
        <begin position="153"/>
        <end position="256"/>
    </location>
</feature>
<feature type="domain" description="Ig-like C2-type 2">
    <location>
        <begin position="362"/>
        <end position="452"/>
    </location>
</feature>
<feature type="domain" description="Ig-like C2-type 3">
    <location>
        <begin position="453"/>
        <end position="543"/>
    </location>
</feature>
<feature type="domain" description="Ig-like C2-type 4">
    <location>
        <begin position="544"/>
        <end position="633"/>
    </location>
</feature>
<feature type="domain" description="Ig-like C2-type 5">
    <location>
        <begin position="645"/>
        <end position="771"/>
    </location>
</feature>
<feature type="domain" description="Fibronectin type-III 1" evidence="5">
    <location>
        <begin position="774"/>
        <end position="870"/>
    </location>
</feature>
<feature type="domain" description="Fibronectin type-III 2" evidence="5">
    <location>
        <begin position="872"/>
        <end position="967"/>
    </location>
</feature>
<feature type="domain" description="Ig-like C2-type 6">
    <location>
        <begin position="971"/>
        <end position="1065"/>
    </location>
</feature>
<feature type="domain" description="Fibronectin type-III 3" evidence="5">
    <location>
        <begin position="1068"/>
        <end position="1163"/>
    </location>
</feature>
<feature type="domain" description="Ig-like C2-type 7">
    <location>
        <begin position="1181"/>
        <end position="1274"/>
    </location>
</feature>
<feature type="region of interest" description="Disordered" evidence="6">
    <location>
        <begin position="107"/>
        <end position="153"/>
    </location>
</feature>
<feature type="compositionally biased region" description="Low complexity" evidence="6">
    <location>
        <begin position="107"/>
        <end position="141"/>
    </location>
</feature>
<feature type="binding site" evidence="27">
    <location>
        <position position="208"/>
    </location>
    <ligand>
        <name>Zn(2+)</name>
        <dbReference type="ChEBI" id="CHEBI:29105"/>
    </ligand>
</feature>
<feature type="binding site" evidence="27">
    <location>
        <position position="210"/>
    </location>
    <ligand>
        <name>Zn(2+)</name>
        <dbReference type="ChEBI" id="CHEBI:29105"/>
    </ligand>
</feature>
<feature type="binding site" evidence="27">
    <location>
        <position position="223"/>
    </location>
    <ligand>
        <name>Zn(2+)</name>
        <dbReference type="ChEBI" id="CHEBI:29105"/>
    </ligand>
</feature>
<feature type="binding site" evidence="27">
    <location>
        <position position="225"/>
    </location>
    <ligand>
        <name>Zn(2+)</name>
        <dbReference type="ChEBI" id="CHEBI:29105"/>
    </ligand>
</feature>
<feature type="modified residue" description="N-acetylmethionine" evidence="2">
    <location>
        <position position="1"/>
    </location>
</feature>
<feature type="modified residue" description="Phosphoserine" evidence="2">
    <location>
        <position position="47"/>
    </location>
</feature>
<feature type="modified residue" description="Phosphoserine; by PKA and PKC" evidence="2">
    <location>
        <position position="275"/>
    </location>
</feature>
<feature type="modified residue" description="Phosphoserine; by PKA and PKC" evidence="2">
    <location>
        <position position="284"/>
    </location>
</feature>
<feature type="modified residue" description="Phosphoserine; by PKA and PKC" evidence="2">
    <location>
        <position position="304"/>
    </location>
</feature>
<feature type="modified residue" description="Phosphoserine" evidence="2">
    <location>
        <position position="311"/>
    </location>
</feature>
<feature type="modified residue" description="Phosphoserine" evidence="2">
    <location>
        <position position="427"/>
    </location>
</feature>
<feature type="modified residue" description="Phosphoserine" evidence="2">
    <location>
        <position position="550"/>
    </location>
</feature>
<feature type="modified residue" description="Phosphothreonine" evidence="3">
    <location>
        <position position="607"/>
    </location>
</feature>
<feature type="modified residue" description="Omega-N-methylarginine" evidence="2">
    <location>
        <position position="1241"/>
    </location>
</feature>
<feature type="disulfide bond" evidence="4">
    <location>
        <begin position="436"/>
        <end position="443"/>
    </location>
</feature>
<feature type="splice variant" id="VSP_047141" description="In isoform 2." evidence="41">
    <original>SK</original>
    <variation>R</variation>
    <location>
        <begin position="408"/>
        <end position="409"/>
    </location>
</feature>
<feature type="sequence variant" id="VAR_029390" description="In CMH4; dbSNP:rs201278114." evidence="21">
    <original>G</original>
    <variation>R</variation>
    <location>
        <position position="5"/>
    </location>
</feature>
<feature type="sequence variant" id="VAR_029391" description="In CMH4; dbSNP:rs121909375." evidence="10">
    <original>T</original>
    <variation>A</variation>
    <location>
        <position position="59"/>
    </location>
</feature>
<feature type="sequence variant" id="VAR_074538" description="In dbSNP:rs730880615." evidence="11">
    <original>P</original>
    <variation>L</variation>
    <location>
        <position position="147"/>
    </location>
</feature>
<feature type="sequence variant" id="VAR_020085" description="In dbSNP:rs3729986." evidence="21 26 40">
    <original>V</original>
    <variation>M</variation>
    <location>
        <position position="158"/>
    </location>
</feature>
<feature type="sequence variant" id="VAR_029392" description="In CMH4; dbSNP:rs397516053." evidence="19">
    <original>P</original>
    <variation>S</variation>
    <location>
        <position position="161"/>
    </location>
</feature>
<feature type="sequence variant" id="VAR_020568" description="In dbSNP:rs11570052." evidence="40">
    <original>V</original>
    <variation>I</variation>
    <location>
        <position position="189"/>
    </location>
</feature>
<feature type="sequence variant" id="VAR_029393" description="In CMH4; dbSNP:rs397516068." evidence="21">
    <original>V</original>
    <variation>L</variation>
    <location>
        <position position="219"/>
    </location>
</feature>
<feature type="sequence variant" id="VAR_029394" description="In CMH4; dbSNP:rs369300885." evidence="20">
    <original>D</original>
    <variation>N</variation>
    <location>
        <position position="228"/>
    </location>
</feature>
<feature type="sequence variant" id="VAR_020086" description="In dbSNP:rs3729989." evidence="11 12 18 21 23 24 26 28 40">
    <original>S</original>
    <variation>G</variation>
    <location>
        <position position="236"/>
    </location>
</feature>
<feature type="sequence variant" id="VAR_029395" description="In CMH4; dbSNP:rs397516070." evidence="16">
    <original>Y</original>
    <variation>S</variation>
    <location>
        <position position="237"/>
    </location>
</feature>
<feature type="sequence variant" id="VAR_029396" description="In CMH4; dbSNP:rs1444087775." evidence="21">
    <original>V</original>
    <variation>I</variation>
    <location>
        <position position="256"/>
    </location>
</feature>
<feature type="sequence variant" id="VAR_019889" description="In CMH4; dbSNP:rs890299857." evidence="14">
    <original>H</original>
    <variation>P</variation>
    <location>
        <position position="257"/>
    </location>
</feature>
<feature type="sequence variant" id="VAR_019890" description="In CMH4; dbSNP:rs397516074." evidence="14 17 18 19 20 21 22 29">
    <original>E</original>
    <variation>K</variation>
    <location>
        <position position="258"/>
    </location>
</feature>
<feature type="sequence variant" id="VAR_042740" description="In CMH4; dbSNP:rs373730381." evidence="22">
    <original>G</original>
    <variation>R</variation>
    <location>
        <position position="263"/>
    </location>
</feature>
<feature type="sequence variant" id="VAR_070449" description="In CMH4; uncertain significance; dbSNP:rs397516075." evidence="29">
    <original>R</original>
    <variation>C</variation>
    <location>
        <position position="272"/>
    </location>
</feature>
<feature type="sequence variant" id="VAR_042741" description="In CMH4; uncertain significance; dbSNP:rs376461745." evidence="25">
    <original>R</original>
    <variation>H</variation>
    <location>
        <position position="273"/>
    </location>
</feature>
<feature type="sequence variant" id="VAR_019891" description="In CMH4; benign; dbSNP:rs147315081." evidence="14 26">
    <original>G</original>
    <variation>E</variation>
    <location>
        <position position="278"/>
    </location>
</feature>
<feature type="sequence variant" id="VAR_019892" description="In CMH4; uncertain significance; dbSNP:rs375774648." evidence="14">
    <original>G</original>
    <variation>A</variation>
    <location>
        <position position="279"/>
    </location>
</feature>
<feature type="sequence variant" id="VAR_020569" description="In dbSNP:rs11570060." evidence="40">
    <original>R</original>
    <variation>Q</variation>
    <location>
        <position position="281"/>
    </location>
</feature>
<feature type="sequence variant" id="VAR_029397" description="In CMH4; dbSNP:rs727504234." evidence="9 18">
    <original>R</original>
    <variation>W</variation>
    <location>
        <position position="282"/>
    </location>
</feature>
<feature type="sequence variant" id="VAR_019893" description="In dbSNP:rs34580776." evidence="8 10 11 12 14 16 18 21 25 26">
    <original>R</original>
    <variation>Q</variation>
    <location>
        <position position="326"/>
    </location>
</feature>
<feature type="sequence variant" id="VAR_074539" description="In CMH4; also found in a patient with RCM; decreases protein abundance; increases polyubiquitination level; accelerates the degradation process; no effect on phosphorylation; decreases endopeptidase activity; increases apoptotic process; dbSNP:rs573916965." evidence="28 33">
    <original>E</original>
    <variation>K</variation>
    <location>
        <position position="334"/>
    </location>
</feature>
<feature type="sequence variant" id="VAR_070450" description="In CMH4; dbSNP:rs777470695." evidence="29">
    <original>I</original>
    <variation>V</variation>
    <location>
        <position position="336"/>
    </location>
</feature>
<feature type="sequence variant" id="VAR_074540" description="In CMH4; dbSNP:rs730880709." evidence="24">
    <original>V</original>
    <variation>D</variation>
    <location>
        <position position="342"/>
    </location>
</feature>
<feature type="sequence variant" id="VAR_019894" description="In CMH4; dbSNP:rs1460895809." evidence="14">
    <original>L</original>
    <variation>P</variation>
    <location>
        <position position="352"/>
    </location>
</feature>
<feature type="sequence variant" id="VAR_020570" description="In dbSNP:rs11570076." evidence="21 40">
    <original>R</original>
    <variation>W</variation>
    <location>
        <position position="382"/>
    </location>
</feature>
<feature type="sequence variant" id="VAR_020571" description="In dbSNP:rs11570077." evidence="40">
    <original>L</original>
    <variation>V</variation>
    <location>
        <position position="383"/>
    </location>
</feature>
<feature type="sequence variant" id="VAR_029398" description="In dbSNP:rs371513491." evidence="21">
    <original>G</original>
    <variation>S</variation>
    <location>
        <position position="416"/>
    </location>
</feature>
<feature type="sequence variant" id="VAR_042742" description="In CMH4." evidence="22">
    <original>A</original>
    <variation>S</variation>
    <location>
        <position position="417"/>
    </location>
</feature>
<feature type="sequence variant" id="VAR_027879" description="In CMH4; dbSNP:rs786204338." evidence="39">
    <original>E</original>
    <variation>Q</variation>
    <location>
        <position position="451"/>
    </location>
</feature>
<feature type="sequence variant" id="VAR_029399" description="In CMH4; dbSNP:rs374255707." evidence="21">
    <original>R</original>
    <variation>H</variation>
    <location>
        <position position="458"/>
    </location>
</feature>
<feature type="sequence variant" id="VAR_029400" description="In CMH4, CMD1MM and LVNC10; dbSNP:rs200625851." evidence="21 26 30 31">
    <original>G</original>
    <variation>R</variation>
    <location>
        <position position="490"/>
    </location>
</feature>
<feature type="sequence variant" id="VAR_070451" description="In CMH4; dbSNP:rs397514752." evidence="32">
    <original>G</original>
    <variation>V</variation>
    <location>
        <position position="490"/>
    </location>
</feature>
<feature type="sequence variant" id="VAR_045929" description="In CMH4; dbSNP:rs397515905." evidence="26">
    <original>R</original>
    <variation>G</variation>
    <location>
        <position position="495"/>
    </location>
</feature>
<feature type="sequence variant" id="VAR_027880" description="In CMH4; dbSNP:rs200411226." evidence="8 21 29 39">
    <original>R</original>
    <variation>Q</variation>
    <location>
        <position position="495"/>
    </location>
</feature>
<feature type="sequence variant" id="VAR_027881" description="In CMH4; dbSNP:rs397515907." evidence="26 29 39">
    <original>R</original>
    <variation>Q</variation>
    <location>
        <position position="502"/>
    </location>
</feature>
<feature type="sequence variant" id="VAR_019895" description="In CMH4; dbSNP:rs375882485." evidence="14 21 25 26">
    <original>R</original>
    <variation>W</variation>
    <location>
        <position position="502"/>
    </location>
</feature>
<feature type="sequence variant" id="VAR_019896" description="In CMH4; dbSNP:rs727504287." evidence="14">
    <location>
        <position position="504"/>
    </location>
</feature>
<feature type="sequence variant" id="VAR_029401" description="In CMH4; dbSNP:rs35736435." evidence="9 18 21">
    <original>G</original>
    <variation>R</variation>
    <location>
        <position position="507"/>
    </location>
</feature>
<feature type="sequence variant" id="VAR_020573" description="In dbSNP:rs11570082." evidence="40">
    <original>A</original>
    <variation>T</variation>
    <location>
        <position position="522"/>
    </location>
</feature>
<feature type="sequence variant" id="VAR_029402" description="In CMH4; dbSNP:rs1168604846." evidence="18">
    <original>G</original>
    <variation>W</variation>
    <location>
        <position position="523"/>
    </location>
</feature>
<feature type="sequence variant" id="VAR_003917" description="In CMH4; dbSNP:rs121909374." evidence="14 21 25 36">
    <original>E</original>
    <variation>Q</variation>
    <location>
        <position position="542"/>
    </location>
</feature>
<feature type="sequence variant" id="VAR_029403" description="In dbSNP:rs377163678." evidence="21">
    <original>L</original>
    <variation>M</variation>
    <location>
        <position position="545"/>
    </location>
</feature>
<feature type="sequence variant" id="VAR_079521" description="In CMH4; dbSNP:rs730880694." evidence="34">
    <original>A</original>
    <variation>V</variation>
    <location>
        <position position="562"/>
    </location>
</feature>
<feature type="sequence variant" id="VAR_029404" description="In CMH4; dbSNP:rs730880695." evidence="9 18">
    <original>C</original>
    <variation>R</variation>
    <location>
        <position position="566"/>
    </location>
</feature>
<feature type="sequence variant" id="VAR_029405" description="In CMH4; dbSNP:rs1172145591." evidence="21">
    <original>D</original>
    <variation>V</variation>
    <location>
        <position position="604"/>
    </location>
</feature>
<feature type="sequence variant" id="VAR_029406" description="In CMH4; uncertain significance; dbSNP:rs376736293." evidence="19 21 26">
    <original>D</original>
    <variation>N</variation>
    <location>
        <position position="605"/>
    </location>
</feature>
<feature type="sequence variant" id="VAR_029407" description="In CMH4; dbSNP:rs778623429." evidence="21">
    <original>P</original>
    <variation>L</variation>
    <location>
        <position position="608"/>
    </location>
</feature>
<feature type="sequence variant" id="VAR_074541" description="In CMH4; dbSNP:rs1352376969." evidence="24">
    <original>A</original>
    <variation>V</variation>
    <location>
        <position position="627"/>
    </location>
</feature>
<feature type="sequence variant" id="VAR_003918" description="In CMH4; uncertain significance; as well folded and stable as the wild-type; dbSNP:rs1800565." evidence="15 38">
    <original>R</original>
    <variation>H</variation>
    <location>
        <position position="654"/>
    </location>
</feature>
<feature type="sequence variant" id="VAR_029408" description="In CMH4; dbSNP:rs727503191." evidence="16">
    <original>R</original>
    <variation>H</variation>
    <location>
        <position position="668"/>
    </location>
</feature>
<feature type="sequence variant" id="VAR_029409" description="In CMH4; dbSNP:rs727503191." evidence="18">
    <original>R</original>
    <variation>P</variation>
    <location>
        <position position="668"/>
    </location>
</feature>
<feature type="sequence variant" id="VAR_042743" description="In CMH4." evidence="22">
    <original>L</original>
    <variation>H</variation>
    <location>
        <position position="669"/>
    </location>
</feature>
<feature type="sequence variant" id="VAR_029410" description="In CMH4; uncertain significance; dbSNP:rs397515956." evidence="21">
    <original>R</original>
    <variation>C</variation>
    <location>
        <position position="733"/>
    </location>
</feature>
<feature type="sequence variant" id="VAR_003919" description="In CMH4; destabilizes the structure of Ig-like C2-type domain 5; dbSNP:rs1060501474." evidence="15 37">
    <original>N</original>
    <variation>K</variation>
    <location>
        <position position="755"/>
    </location>
</feature>
<feature type="sequence variant" id="VAR_042744" description="In CMH4; dbSNP:rs765629179." evidence="22">
    <original>E</original>
    <variation>D</variation>
    <location>
        <position position="759"/>
    </location>
</feature>
<feature type="sequence variant" id="VAR_029411" description="In CMH4; dbSNP:rs36211723." evidence="21">
    <original>D</original>
    <variation>N</variation>
    <location>
        <position position="770"/>
    </location>
</feature>
<feature type="sequence variant" id="VAR_074542" description="In CMH4; dbSNP:rs371488302." evidence="24">
    <original>V</original>
    <variation>M</variation>
    <location>
        <position position="771"/>
    </location>
</feature>
<feature type="sequence variant" id="VAR_029412" description="In CMH4; dbSNP:rs187830361." evidence="21">
    <original>W</original>
    <variation>R</variation>
    <location>
        <position position="792"/>
    </location>
</feature>
<feature type="sequence variant" id="VAR_029413" description="In CMH4; dbSNP:rs375675796." evidence="17 21">
    <original>R</original>
    <variation>H</variation>
    <location>
        <position position="810"/>
    </location>
</feature>
<feature type="sequence variant" id="VAR_019897" description="In CMH4; dbSNP:rs1338707268." evidence="14">
    <original>K</original>
    <variation>R</variation>
    <location>
        <position position="811"/>
    </location>
</feature>
<feature type="sequence variant" id="VAR_029414" description="In CMH4; dbSNP:rs727504288." evidence="21">
    <location>
        <position position="811"/>
    </location>
</feature>
<feature type="sequence variant" id="VAR_029415" description="In CMH4." evidence="20">
    <location>
        <position position="813"/>
    </location>
</feature>
<feature type="sequence variant" id="VAR_074543" description="In CMH4; no effect on protein abundance; no effect on endopeptidase activity." evidence="28">
    <location>
        <position position="814"/>
    </location>
</feature>
<feature type="sequence variant" id="VAR_029416" description="In CMH4; dbSNP:rs2856655." evidence="13 17 35 36">
    <original>R</original>
    <variation>Q</variation>
    <location>
        <position position="820"/>
    </location>
</feature>
<feature type="sequence variant" id="VAR_029417" description="In CMH4 and CMD1MM; dbSNP:rs199865688." evidence="16 19 20 21 30">
    <original>A</original>
    <variation>T</variation>
    <location>
        <position position="833"/>
    </location>
</feature>
<feature type="sequence variant" id="VAR_019898" description="In CMH4; benign; dbSNP:rs3729952." evidence="14 18 40">
    <original>A</original>
    <variation>V</variation>
    <location>
        <position position="833"/>
    </location>
</feature>
<feature type="sequence variant" id="VAR_029418" description="In CMH4.">
    <original>R</original>
    <variation>T</variation>
    <location>
        <position position="834"/>
    </location>
</feature>
<feature type="sequence variant" id="VAR_029419" description="In CMH4; uncertain significance; dbSNP:rs752007810." evidence="19">
    <original>R</original>
    <variation>W</variation>
    <location>
        <position position="834"/>
    </location>
</feature>
<feature type="sequence variant" id="VAR_029420" description="In CMH4; dbSNP:rs371401403." evidence="17">
    <original>P</original>
    <variation>H</variation>
    <location>
        <position position="873"/>
    </location>
</feature>
<feature type="sequence variant" id="VAR_070452" description="In LVNC10; dbSNP:rs371401403." evidence="31">
    <original>P</original>
    <variation>L</variation>
    <location>
        <position position="873"/>
    </location>
</feature>
<feature type="sequence variant" id="VAR_019899" description="May act as a phenotype modifier in cardiomyopathy patients; dbSNP:rs35078470." evidence="7 11 14 16 21 26">
    <original>V</original>
    <variation>M</variation>
    <location>
        <position position="896"/>
    </location>
</feature>
<feature type="sequence variant" id="VAR_029421" description="In CMH4; dbSNP:rs121909376." evidence="12">
    <original>N</original>
    <variation>T</variation>
    <location>
        <position position="948"/>
    </location>
</feature>
<feature type="sequence variant" id="VAR_070453" description="In CMH4; dbSNP:rs193922380." evidence="29">
    <original>T</original>
    <variation>S</variation>
    <location>
        <position position="957"/>
    </location>
</feature>
<feature type="sequence variant" id="VAR_070454" description="In CMH4; dbSNP:rs376504548." evidence="29">
    <original>T</original>
    <variation>I</variation>
    <location>
        <position position="958"/>
    </location>
</feature>
<feature type="sequence variant" id="VAR_020574" description="In CMH4; no effect on protein abundance; no effect on endopeptidase activity; dbSNP:rs11570112." evidence="21 28 40">
    <original>Q</original>
    <variation>E</variation>
    <location>
        <position position="998"/>
    </location>
</feature>
<feature type="sequence variant" id="VAR_029422" description="In CMH4; dbSNP:rs727503177." evidence="21">
    <original>Q</original>
    <variation>R</variation>
    <location>
        <position position="998"/>
    </location>
</feature>
<feature type="sequence variant" id="VAR_029423" description="In CMH4; dbSNP:rs727504235." evidence="10">
    <original>R</original>
    <variation>Q</variation>
    <location>
        <position position="1002"/>
    </location>
</feature>
<feature type="sequence variant" id="VAR_029424" description="In dbSNP:rs3729799." evidence="26">
    <original>R</original>
    <variation>W</variation>
    <location>
        <position position="1002"/>
    </location>
</feature>
<feature type="sequence variant" id="VAR_029425" description="In CMH4.">
    <original>P</original>
    <variation>Q</variation>
    <location>
        <position position="1003"/>
    </location>
</feature>
<feature type="sequence variant" id="VAR_045930" description="In CMH4; dbSNP:rs397516002." evidence="26">
    <original>T</original>
    <variation>S</variation>
    <location>
        <position position="1028"/>
    </location>
</feature>
<feature type="sequence variant" id="VAR_074544" description="In CMH4; no effect on protein abundance; no effect on endopeptidase activity; dbSNP:rs371061770." evidence="28">
    <original>T</original>
    <variation>M</variation>
    <location>
        <position position="1046"/>
    </location>
</feature>
<feature type="sequence variant" id="VAR_020575" description="In dbSNP:rs11570113." evidence="40">
    <original>R</original>
    <variation>C</variation>
    <location>
        <position position="1048"/>
    </location>
</feature>
<feature type="sequence variant" id="VAR_029426" description="In CMH4; dbSNP:rs1393559112." evidence="21">
    <original>F</original>
    <variation>I</variation>
    <location>
        <position position="1113"/>
    </location>
</feature>
<feature type="sequence variant" id="VAR_029427" description="In CMH4; dbSNP:rs531189495." evidence="9 18">
    <original>V</original>
    <variation>I</variation>
    <location>
        <position position="1115"/>
    </location>
</feature>
<feature type="sequence variant" id="VAR_029428" description="In CMH4; uncertain significance; dbSNP:rs370890951." evidence="19 21">
    <original>I</original>
    <variation>T</variation>
    <location>
        <position position="1131"/>
    </location>
</feature>
<feature type="sequence variant" id="VAR_074545" description="In dbSNP:rs187705120." evidence="11">
    <original>R</original>
    <variation>H</variation>
    <location>
        <position position="1138"/>
    </location>
</feature>
<feature type="sequence variant" id="VAR_029429" description="In CMH4.">
    <location>
        <position position="1155"/>
    </location>
</feature>
<feature type="sequence variant" id="VAR_019900" description="In CMH4; dbSNP:rs397516026." evidence="14">
    <original>A</original>
    <variation>T</variation>
    <location>
        <position position="1194"/>
    </location>
</feature>
<feature type="sequence variant" id="VAR_045931" description="In CMH4; uncertain significance; dbSNP:rs202147520." evidence="26">
    <original>G</original>
    <variation>R</variation>
    <location>
        <position position="1248"/>
    </location>
</feature>
<feature type="sequence variant" id="VAR_019901" description="In CMH4; dbSNP:rs727503167." evidence="14">
    <original>A</original>
    <variation>T</variation>
    <location>
        <position position="1255"/>
    </location>
</feature>
<feature type="sequence variant" id="VAR_070455" description="In CMD1MM; dbSNP:rs397514751." evidence="30">
    <original>C</original>
    <variation>F</variation>
    <location>
        <position position="1264"/>
    </location>
</feature>
<feature type="sequence conflict" description="In Ref. 1 and 2." evidence="41" ref="1 2">
    <original>D</original>
    <variation>E</variation>
    <location>
        <position position="248"/>
    </location>
</feature>
<feature type="sequence conflict" description="In Ref. 4; AAR89909." evidence="41" ref="4">
    <original>RD</original>
    <variation>SS</variation>
    <location>
        <begin position="302"/>
        <end position="303"/>
    </location>
</feature>
<feature type="sequence conflict" description="In Ref. 1; CAA58882." evidence="41" ref="1">
    <original>A</original>
    <variation>R</variation>
    <location>
        <position position="536"/>
    </location>
</feature>
<feature type="strand" evidence="45">
    <location>
        <begin position="19"/>
        <end position="22"/>
    </location>
</feature>
<feature type="strand" evidence="45">
    <location>
        <begin position="27"/>
        <end position="32"/>
    </location>
</feature>
<feature type="strand" evidence="45">
    <location>
        <begin position="34"/>
        <end position="37"/>
    </location>
</feature>
<feature type="strand" evidence="45">
    <location>
        <begin position="41"/>
        <end position="43"/>
    </location>
</feature>
<feature type="strand" evidence="45">
    <location>
        <begin position="45"/>
        <end position="49"/>
    </location>
</feature>
<feature type="strand" evidence="45">
    <location>
        <begin position="56"/>
        <end position="60"/>
    </location>
</feature>
<feature type="strand" evidence="45">
    <location>
        <begin position="63"/>
        <end position="70"/>
    </location>
</feature>
<feature type="strand" evidence="45">
    <location>
        <begin position="77"/>
        <end position="83"/>
    </location>
</feature>
<feature type="strand" evidence="45">
    <location>
        <begin position="86"/>
        <end position="95"/>
    </location>
</feature>
<feature type="strand" evidence="44">
    <location>
        <begin position="156"/>
        <end position="159"/>
    </location>
</feature>
<feature type="strand" evidence="48">
    <location>
        <begin position="164"/>
        <end position="167"/>
    </location>
</feature>
<feature type="strand" evidence="48">
    <location>
        <begin position="172"/>
        <end position="179"/>
    </location>
</feature>
<feature type="strand" evidence="44">
    <location>
        <begin position="184"/>
        <end position="186"/>
    </location>
</feature>
<feature type="strand" evidence="48">
    <location>
        <begin position="188"/>
        <end position="193"/>
    </location>
</feature>
<feature type="turn" evidence="48">
    <location>
        <begin position="194"/>
        <end position="196"/>
    </location>
</feature>
<feature type="helix" evidence="48">
    <location>
        <begin position="199"/>
        <end position="202"/>
    </location>
</feature>
<feature type="strand" evidence="48">
    <location>
        <begin position="207"/>
        <end position="214"/>
    </location>
</feature>
<feature type="turn" evidence="48">
    <location>
        <begin position="215"/>
        <end position="218"/>
    </location>
</feature>
<feature type="strand" evidence="48">
    <location>
        <begin position="219"/>
        <end position="226"/>
    </location>
</feature>
<feature type="helix" evidence="48">
    <location>
        <begin position="231"/>
        <end position="233"/>
    </location>
</feature>
<feature type="strand" evidence="48">
    <location>
        <begin position="235"/>
        <end position="242"/>
    </location>
</feature>
<feature type="strand" evidence="48">
    <location>
        <begin position="247"/>
        <end position="257"/>
    </location>
</feature>
<feature type="helix" evidence="49">
    <location>
        <begin position="321"/>
        <end position="326"/>
    </location>
</feature>
<feature type="helix" evidence="49">
    <location>
        <begin position="330"/>
        <end position="332"/>
    </location>
</feature>
<feature type="helix" evidence="49">
    <location>
        <begin position="333"/>
        <end position="339"/>
    </location>
</feature>
<feature type="helix" evidence="49">
    <location>
        <begin position="345"/>
        <end position="355"/>
    </location>
</feature>
<feature type="strand" evidence="43">
    <location>
        <begin position="366"/>
        <end position="368"/>
    </location>
</feature>
<feature type="strand" evidence="43">
    <location>
        <begin position="371"/>
        <end position="376"/>
    </location>
</feature>
<feature type="strand" evidence="43">
    <location>
        <begin position="381"/>
        <end position="386"/>
    </location>
</feature>
<feature type="strand" evidence="43">
    <location>
        <begin position="388"/>
        <end position="392"/>
    </location>
</feature>
<feature type="strand" evidence="43">
    <location>
        <begin position="395"/>
        <end position="403"/>
    </location>
</feature>
<feature type="strand" evidence="43">
    <location>
        <begin position="407"/>
        <end position="415"/>
    </location>
</feature>
<feature type="strand" evidence="43">
    <location>
        <begin position="418"/>
        <end position="423"/>
    </location>
</feature>
<feature type="strand" evidence="43">
    <location>
        <begin position="427"/>
        <end position="430"/>
    </location>
</feature>
<feature type="strand" evidence="43">
    <location>
        <begin position="432"/>
        <end position="438"/>
    </location>
</feature>
<feature type="strand" evidence="43">
    <location>
        <begin position="441"/>
        <end position="443"/>
    </location>
</feature>
<feature type="strand" evidence="43">
    <location>
        <begin position="446"/>
        <end position="450"/>
    </location>
</feature>
<feature type="strand" evidence="46">
    <location>
        <begin position="456"/>
        <end position="458"/>
    </location>
</feature>
<feature type="strand" evidence="46">
    <location>
        <begin position="465"/>
        <end position="467"/>
    </location>
</feature>
<feature type="strand" evidence="47">
    <location>
        <begin position="471"/>
        <end position="474"/>
    </location>
</feature>
<feature type="strand" evidence="46">
    <location>
        <begin position="475"/>
        <end position="479"/>
    </location>
</feature>
<feature type="strand" evidence="46">
    <location>
        <begin position="486"/>
        <end position="488"/>
    </location>
</feature>
<feature type="strand" evidence="46">
    <location>
        <begin position="499"/>
        <end position="506"/>
    </location>
</feature>
<feature type="strand" evidence="46">
    <location>
        <begin position="509"/>
        <end position="517"/>
    </location>
</feature>
<feature type="turn" evidence="47">
    <location>
        <begin position="519"/>
        <end position="521"/>
    </location>
</feature>
<feature type="strand" evidence="46">
    <location>
        <begin position="524"/>
        <end position="528"/>
    </location>
</feature>
<feature type="strand" evidence="46">
    <location>
        <begin position="533"/>
        <end position="537"/>
    </location>
</feature>
<feature type="strand" evidence="42">
    <location>
        <begin position="650"/>
        <end position="652"/>
    </location>
</feature>
<feature type="strand" evidence="42">
    <location>
        <begin position="658"/>
        <end position="665"/>
    </location>
</feature>
<feature type="strand" evidence="42">
    <location>
        <begin position="670"/>
        <end position="672"/>
    </location>
</feature>
<feature type="strand" evidence="42">
    <location>
        <begin position="675"/>
        <end position="677"/>
    </location>
</feature>
<feature type="strand" evidence="42">
    <location>
        <begin position="680"/>
        <end position="686"/>
    </location>
</feature>
<feature type="strand" evidence="42">
    <location>
        <begin position="722"/>
        <end position="724"/>
    </location>
</feature>
<feature type="strand" evidence="42">
    <location>
        <begin position="726"/>
        <end position="730"/>
    </location>
</feature>
<feature type="strand" evidence="42">
    <location>
        <begin position="733"/>
        <end position="737"/>
    </location>
</feature>
<feature type="turn" evidence="42">
    <location>
        <begin position="743"/>
        <end position="745"/>
    </location>
</feature>
<feature type="strand" evidence="42">
    <location>
        <begin position="747"/>
        <end position="754"/>
    </location>
</feature>
<feature type="strand" evidence="42">
    <location>
        <begin position="759"/>
        <end position="768"/>
    </location>
</feature>
<dbReference type="EMBL" id="X84075">
    <property type="protein sequence ID" value="CAA58882.1"/>
    <property type="molecule type" value="mRNA"/>
</dbReference>
<dbReference type="EMBL" id="Y10129">
    <property type="protein sequence ID" value="CAA71216.1"/>
    <property type="molecule type" value="Genomic_DNA"/>
</dbReference>
<dbReference type="EMBL" id="U91629">
    <property type="protein sequence ID" value="AAC04620.1"/>
    <property type="molecule type" value="Genomic_DNA"/>
</dbReference>
<dbReference type="EMBL" id="AY518390">
    <property type="protein sequence ID" value="AAR89909.1"/>
    <property type="molecule type" value="Genomic_DNA"/>
</dbReference>
<dbReference type="EMBL" id="GU324918">
    <property type="protein sequence ID" value="ADL14489.1"/>
    <property type="molecule type" value="Genomic_DNA"/>
</dbReference>
<dbReference type="EMBL" id="AC090582">
    <property type="status" value="NOT_ANNOTATED_CDS"/>
    <property type="molecule type" value="Genomic_DNA"/>
</dbReference>
<dbReference type="EMBL" id="BC136543">
    <property type="protein sequence ID" value="AAI36544.1"/>
    <property type="molecule type" value="mRNA"/>
</dbReference>
<dbReference type="EMBL" id="BC136546">
    <property type="protein sequence ID" value="AAI36547.1"/>
    <property type="molecule type" value="mRNA"/>
</dbReference>
<dbReference type="EMBL" id="BC142685">
    <property type="protein sequence ID" value="AAI42686.1"/>
    <property type="molecule type" value="mRNA"/>
</dbReference>
<dbReference type="EMBL" id="BC151211">
    <property type="protein sequence ID" value="AAI51212.1"/>
    <property type="molecule type" value="mRNA"/>
</dbReference>
<dbReference type="EMBL" id="S80778">
    <property type="protein sequence ID" value="AAB35662.1"/>
    <property type="molecule type" value="mRNA"/>
</dbReference>
<dbReference type="CCDS" id="CCDS53621.1">
    <molecule id="Q14896-1"/>
</dbReference>
<dbReference type="PIR" id="S55050">
    <property type="entry name" value="S55050"/>
</dbReference>
<dbReference type="RefSeq" id="NP_000247.2">
    <molecule id="Q14896-1"/>
    <property type="nucleotide sequence ID" value="NM_000256.3"/>
</dbReference>
<dbReference type="PDB" id="1GXE">
    <property type="method" value="NMR"/>
    <property type="chains" value="A=641-770"/>
</dbReference>
<dbReference type="PDB" id="1PD6">
    <property type="method" value="NMR"/>
    <property type="chains" value="A=358-451"/>
</dbReference>
<dbReference type="PDB" id="2AVG">
    <property type="method" value="NMR"/>
    <property type="chains" value="A=151-260"/>
</dbReference>
<dbReference type="PDB" id="2K1M">
    <property type="method" value="NMR"/>
    <property type="chains" value="A=2-96"/>
</dbReference>
<dbReference type="PDB" id="2MQ0">
    <property type="method" value="NMR"/>
    <property type="chains" value="A=453-543"/>
</dbReference>
<dbReference type="PDB" id="2MQ3">
    <property type="method" value="NMR"/>
    <property type="chains" value="A=453-543"/>
</dbReference>
<dbReference type="PDB" id="2V6H">
    <property type="method" value="X-ray"/>
    <property type="resolution" value="1.55 A"/>
    <property type="chains" value="A=151-258"/>
</dbReference>
<dbReference type="PDB" id="3CX2">
    <property type="method" value="X-ray"/>
    <property type="resolution" value="1.30 A"/>
    <property type="chains" value="A=151-258"/>
</dbReference>
<dbReference type="PDB" id="5K6P">
    <property type="method" value="NMR"/>
    <property type="chains" value="A=319-451"/>
</dbReference>
<dbReference type="PDB" id="6CXI">
    <property type="method" value="EM"/>
    <property type="resolution" value="11.00 A"/>
    <property type="chains" value="G/H/I/J/K/L=151-258, M/N/O/P/Q=1-101"/>
</dbReference>
<dbReference type="PDB" id="6CXJ">
    <property type="method" value="EM"/>
    <property type="resolution" value="11.00 A"/>
    <property type="chains" value="G/H/I/J/K/L=151-258, M/N/O/P/Q=1-101"/>
</dbReference>
<dbReference type="PDB" id="6G2T">
    <property type="method" value="EM"/>
    <property type="resolution" value="9.00 A"/>
    <property type="chains" value="G/H/I/J/K/L=151-258"/>
</dbReference>
<dbReference type="PDB" id="7LRG">
    <property type="method" value="EM"/>
    <property type="resolution" value="6.10 A"/>
    <property type="chains" value="G/H/I/J/K/L=358-451"/>
</dbReference>
<dbReference type="PDB" id="7TIJ">
    <property type="method" value="EM"/>
    <property type="resolution" value="8.00 A"/>
    <property type="chains" value="G/H/I/J/K/L=151-370"/>
</dbReference>
<dbReference type="PDB" id="7TIT">
    <property type="method" value="EM"/>
    <property type="resolution" value="8.00 A"/>
    <property type="chains" value="G/H/I/J/K/L=151-370"/>
</dbReference>
<dbReference type="PDB" id="7TJ7">
    <property type="method" value="EM"/>
    <property type="resolution" value="8.00 A"/>
    <property type="chains" value="G/H/I/J/K/L/M/N/O/P/Q/R=151-370"/>
</dbReference>
<dbReference type="PDB" id="8G4L">
    <property type="method" value="EM"/>
    <property type="resolution" value="6.40 A"/>
    <property type="chains" value="ao/bo/o=1-1274"/>
</dbReference>
<dbReference type="PDBsum" id="1GXE"/>
<dbReference type="PDBsum" id="1PD6"/>
<dbReference type="PDBsum" id="2AVG"/>
<dbReference type="PDBsum" id="2K1M"/>
<dbReference type="PDBsum" id="2MQ0"/>
<dbReference type="PDBsum" id="2MQ3"/>
<dbReference type="PDBsum" id="2V6H"/>
<dbReference type="PDBsum" id="3CX2"/>
<dbReference type="PDBsum" id="5K6P"/>
<dbReference type="PDBsum" id="6CXI"/>
<dbReference type="PDBsum" id="6CXJ"/>
<dbReference type="PDBsum" id="6G2T"/>
<dbReference type="PDBsum" id="7LRG"/>
<dbReference type="PDBsum" id="7TIJ"/>
<dbReference type="PDBsum" id="7TIT"/>
<dbReference type="PDBsum" id="7TJ7"/>
<dbReference type="PDBsum" id="8G4L"/>
<dbReference type="BMRB" id="Q14896"/>
<dbReference type="EMDB" id="EMD-23497"/>
<dbReference type="EMDB" id="EMD-25911"/>
<dbReference type="EMDB" id="EMD-25914"/>
<dbReference type="EMDB" id="EMD-25918"/>
<dbReference type="EMDB" id="EMD-29722"/>
<dbReference type="EMDB" id="EMD-4346"/>
<dbReference type="EMDB" id="EMD-7780"/>
<dbReference type="EMDB" id="EMD-7781"/>
<dbReference type="SASBDB" id="Q14896"/>
<dbReference type="SMR" id="Q14896"/>
<dbReference type="BioGRID" id="110692">
    <property type="interactions" value="11"/>
</dbReference>
<dbReference type="FunCoup" id="Q14896">
    <property type="interactions" value="27"/>
</dbReference>
<dbReference type="IntAct" id="Q14896">
    <property type="interactions" value="17"/>
</dbReference>
<dbReference type="MINT" id="Q14896"/>
<dbReference type="STRING" id="9606.ENSP00000442795"/>
<dbReference type="DrugBank" id="DB18490">
    <property type="generic name" value="Aficamten"/>
</dbReference>
<dbReference type="DrugBank" id="DB11816">
    <property type="generic name" value="Omecamtiv Mecarbil"/>
</dbReference>
<dbReference type="GlyGen" id="Q14896">
    <property type="glycosylation" value="4 sites, 1 O-linked glycan (3 sites)"/>
</dbReference>
<dbReference type="iPTMnet" id="Q14896"/>
<dbReference type="PhosphoSitePlus" id="Q14896"/>
<dbReference type="BioMuta" id="MYBPC3"/>
<dbReference type="DMDM" id="425906074"/>
<dbReference type="jPOST" id="Q14896"/>
<dbReference type="MassIVE" id="Q14896"/>
<dbReference type="PaxDb" id="9606-ENSP00000442795"/>
<dbReference type="PeptideAtlas" id="Q14896"/>
<dbReference type="ProteomicsDB" id="60216">
    <molecule id="Q14896-1"/>
</dbReference>
<dbReference type="ProteomicsDB" id="727"/>
<dbReference type="Antibodypedia" id="36699">
    <property type="antibodies" value="259 antibodies from 37 providers"/>
</dbReference>
<dbReference type="DNASU" id="4607"/>
<dbReference type="Ensembl" id="ENST00000545968.6">
    <molecule id="Q14896-1"/>
    <property type="protein sequence ID" value="ENSP00000442795.1"/>
    <property type="gene ID" value="ENSG00000134571.12"/>
</dbReference>
<dbReference type="GeneID" id="4607"/>
<dbReference type="KEGG" id="hsa:4607"/>
<dbReference type="MANE-Select" id="ENST00000545968.6">
    <property type="protein sequence ID" value="ENSP00000442795.1"/>
    <property type="RefSeq nucleotide sequence ID" value="NM_000256.3"/>
    <property type="RefSeq protein sequence ID" value="NP_000247.2"/>
</dbReference>
<dbReference type="UCSC" id="uc058bdz.1">
    <molecule id="Q14896-1"/>
    <property type="organism name" value="human"/>
</dbReference>
<dbReference type="AGR" id="HGNC:7551"/>
<dbReference type="CTD" id="4607"/>
<dbReference type="DisGeNET" id="4607"/>
<dbReference type="GeneCards" id="MYBPC3"/>
<dbReference type="GeneReviews" id="MYBPC3"/>
<dbReference type="HGNC" id="HGNC:7551">
    <property type="gene designation" value="MYBPC3"/>
</dbReference>
<dbReference type="HPA" id="ENSG00000134571">
    <property type="expression patterns" value="Tissue enriched (heart)"/>
</dbReference>
<dbReference type="MalaCards" id="MYBPC3"/>
<dbReference type="MIM" id="115197">
    <property type="type" value="phenotype"/>
</dbReference>
<dbReference type="MIM" id="600958">
    <property type="type" value="gene"/>
</dbReference>
<dbReference type="MIM" id="615396">
    <property type="type" value="phenotype"/>
</dbReference>
<dbReference type="neXtProt" id="NX_Q14896"/>
<dbReference type="OpenTargets" id="ENSG00000134571"/>
<dbReference type="Orphanet" id="154">
    <property type="disease" value="Familial isolated dilated cardiomyopathy"/>
</dbReference>
<dbReference type="Orphanet" id="54260">
    <property type="disease" value="Left ventricular noncompaction"/>
</dbReference>
<dbReference type="PharmGKB" id="PA31351"/>
<dbReference type="VEuPathDB" id="HostDB:ENSG00000134571"/>
<dbReference type="eggNOG" id="ENOG502QWRQ">
    <property type="taxonomic scope" value="Eukaryota"/>
</dbReference>
<dbReference type="GeneTree" id="ENSGT00940000157698"/>
<dbReference type="InParanoid" id="Q14896"/>
<dbReference type="OMA" id="QFDGGQP"/>
<dbReference type="OrthoDB" id="6107607at2759"/>
<dbReference type="PAN-GO" id="Q14896">
    <property type="GO annotations" value="1 GO annotation based on evolutionary models"/>
</dbReference>
<dbReference type="TreeFam" id="TF351819"/>
<dbReference type="PathwayCommons" id="Q14896"/>
<dbReference type="Reactome" id="R-HSA-390522">
    <property type="pathway name" value="Striated Muscle Contraction"/>
</dbReference>
<dbReference type="SignaLink" id="Q14896"/>
<dbReference type="SIGNOR" id="Q14896"/>
<dbReference type="BioGRID-ORCS" id="4607">
    <property type="hits" value="16 hits in 1148 CRISPR screens"/>
</dbReference>
<dbReference type="ChiTaRS" id="MYBPC3">
    <property type="organism name" value="human"/>
</dbReference>
<dbReference type="EvolutionaryTrace" id="Q14896"/>
<dbReference type="GeneWiki" id="Myosin_binding_protein_C,_cardiac"/>
<dbReference type="GenomeRNAi" id="4607"/>
<dbReference type="Pharos" id="Q14896">
    <property type="development level" value="Tbio"/>
</dbReference>
<dbReference type="PRO" id="PR:Q14896"/>
<dbReference type="Proteomes" id="UP000005640">
    <property type="component" value="Chromosome 11"/>
</dbReference>
<dbReference type="RNAct" id="Q14896">
    <property type="molecule type" value="protein"/>
</dbReference>
<dbReference type="Bgee" id="ENSG00000134571">
    <property type="expression patterns" value="Expressed in apex of heart and 127 other cell types or tissues"/>
</dbReference>
<dbReference type="ExpressionAtlas" id="Q14896">
    <property type="expression patterns" value="baseline and differential"/>
</dbReference>
<dbReference type="GO" id="GO:0031672">
    <property type="term" value="C:A band"/>
    <property type="evidence" value="ECO:0000314"/>
    <property type="project" value="BHF-UCL"/>
</dbReference>
<dbReference type="GO" id="GO:0014705">
    <property type="term" value="C:C zone"/>
    <property type="evidence" value="ECO:0000303"/>
    <property type="project" value="BHF-UCL"/>
</dbReference>
<dbReference type="GO" id="GO:0097512">
    <property type="term" value="C:cardiac myofibril"/>
    <property type="evidence" value="ECO:0000314"/>
    <property type="project" value="CAFA"/>
</dbReference>
<dbReference type="GO" id="GO:0005829">
    <property type="term" value="C:cytosol"/>
    <property type="evidence" value="ECO:0000304"/>
    <property type="project" value="Reactome"/>
</dbReference>
<dbReference type="GO" id="GO:0031430">
    <property type="term" value="C:M band"/>
    <property type="evidence" value="ECO:0000318"/>
    <property type="project" value="GO_Central"/>
</dbReference>
<dbReference type="GO" id="GO:0030017">
    <property type="term" value="C:sarcomere"/>
    <property type="evidence" value="ECO:0000314"/>
    <property type="project" value="BHF-UCL"/>
</dbReference>
<dbReference type="GO" id="GO:0005863">
    <property type="term" value="C:striated muscle myosin thick filament"/>
    <property type="evidence" value="ECO:0000314"/>
    <property type="project" value="BHF-UCL"/>
</dbReference>
<dbReference type="GO" id="GO:0003779">
    <property type="term" value="F:actin binding"/>
    <property type="evidence" value="ECO:0007669"/>
    <property type="project" value="UniProtKB-KW"/>
</dbReference>
<dbReference type="GO" id="GO:0001671">
    <property type="term" value="F:ATPase activator activity"/>
    <property type="evidence" value="ECO:0000250"/>
    <property type="project" value="BHF-UCL"/>
</dbReference>
<dbReference type="GO" id="GO:0042802">
    <property type="term" value="F:identical protein binding"/>
    <property type="evidence" value="ECO:0000353"/>
    <property type="project" value="IntAct"/>
</dbReference>
<dbReference type="GO" id="GO:0046872">
    <property type="term" value="F:metal ion binding"/>
    <property type="evidence" value="ECO:0007669"/>
    <property type="project" value="UniProtKB-KW"/>
</dbReference>
<dbReference type="GO" id="GO:0017022">
    <property type="term" value="F:myosin binding"/>
    <property type="evidence" value="ECO:0000314"/>
    <property type="project" value="BHF-UCL"/>
</dbReference>
<dbReference type="GO" id="GO:0032036">
    <property type="term" value="F:myosin heavy chain binding"/>
    <property type="evidence" value="ECO:0000353"/>
    <property type="project" value="BHF-UCL"/>
</dbReference>
<dbReference type="GO" id="GO:0008307">
    <property type="term" value="F:structural constituent of muscle"/>
    <property type="evidence" value="ECO:0000315"/>
    <property type="project" value="BHF-UCL"/>
</dbReference>
<dbReference type="GO" id="GO:0031432">
    <property type="term" value="F:titin binding"/>
    <property type="evidence" value="ECO:0000303"/>
    <property type="project" value="BHF-UCL"/>
</dbReference>
<dbReference type="GO" id="GO:0060048">
    <property type="term" value="P:cardiac muscle contraction"/>
    <property type="evidence" value="ECO:0000250"/>
    <property type="project" value="BHF-UCL"/>
</dbReference>
<dbReference type="GO" id="GO:0007155">
    <property type="term" value="P:cell adhesion"/>
    <property type="evidence" value="ECO:0007669"/>
    <property type="project" value="UniProtKB-KW"/>
</dbReference>
<dbReference type="GO" id="GO:0003007">
    <property type="term" value="P:heart morphogenesis"/>
    <property type="evidence" value="ECO:0000315"/>
    <property type="project" value="BHF-UCL"/>
</dbReference>
<dbReference type="GO" id="GO:0086004">
    <property type="term" value="P:regulation of cardiac muscle cell contraction"/>
    <property type="evidence" value="ECO:0000250"/>
    <property type="project" value="BHF-UCL"/>
</dbReference>
<dbReference type="GO" id="GO:0032971">
    <property type="term" value="P:regulation of muscle filament sliding"/>
    <property type="evidence" value="ECO:0000250"/>
    <property type="project" value="BHF-UCL"/>
</dbReference>
<dbReference type="GO" id="GO:0006942">
    <property type="term" value="P:regulation of striated muscle contraction"/>
    <property type="evidence" value="ECO:0000250"/>
    <property type="project" value="BHF-UCL"/>
</dbReference>
<dbReference type="GO" id="GO:0045214">
    <property type="term" value="P:sarcomere organization"/>
    <property type="evidence" value="ECO:0000318"/>
    <property type="project" value="GO_Central"/>
</dbReference>
<dbReference type="GO" id="GO:0055010">
    <property type="term" value="P:ventricular cardiac muscle tissue morphogenesis"/>
    <property type="evidence" value="ECO:0000315"/>
    <property type="project" value="HGNC-UCL"/>
</dbReference>
<dbReference type="CDD" id="cd00063">
    <property type="entry name" value="FN3"/>
    <property type="match status" value="3"/>
</dbReference>
<dbReference type="CDD" id="cd00096">
    <property type="entry name" value="Ig"/>
    <property type="match status" value="1"/>
</dbReference>
<dbReference type="CDD" id="cd05894">
    <property type="entry name" value="Ig_C5_MyBP-C"/>
    <property type="match status" value="1"/>
</dbReference>
<dbReference type="CDD" id="cd05748">
    <property type="entry name" value="Ig_Titin_like"/>
    <property type="match status" value="1"/>
</dbReference>
<dbReference type="CDD" id="cd20962">
    <property type="entry name" value="IgI_C1_MyBP-C_like"/>
    <property type="match status" value="1"/>
</dbReference>
<dbReference type="CDD" id="cd20967">
    <property type="entry name" value="IgI_C2_MyBP-C-like"/>
    <property type="match status" value="1"/>
</dbReference>
<dbReference type="FunFam" id="2.60.40.10:FF:000225">
    <property type="entry name" value="Myosin-binding protein C, cardiac-type"/>
    <property type="match status" value="1"/>
</dbReference>
<dbReference type="FunFam" id="2.60.40.10:FF:000326">
    <property type="entry name" value="Myosin-binding protein C, cardiac-type"/>
    <property type="match status" value="1"/>
</dbReference>
<dbReference type="FunFam" id="2.60.40.10:FF:000518">
    <property type="entry name" value="Myosin-binding protein C, cardiac-type"/>
    <property type="match status" value="1"/>
</dbReference>
<dbReference type="FunFam" id="2.60.40.10:FF:000576">
    <property type="entry name" value="Myosin-binding protein C, cardiac-type"/>
    <property type="match status" value="1"/>
</dbReference>
<dbReference type="FunFam" id="2.60.40.10:FF:000031">
    <property type="entry name" value="Myosin-binding protein C, slow type"/>
    <property type="match status" value="1"/>
</dbReference>
<dbReference type="FunFam" id="2.60.40.10:FF:000060">
    <property type="entry name" value="Myosin-binding protein C, slow type"/>
    <property type="match status" value="1"/>
</dbReference>
<dbReference type="FunFam" id="2.60.40.10:FF:000062">
    <property type="entry name" value="Myosin-binding protein C, slow type"/>
    <property type="match status" value="1"/>
</dbReference>
<dbReference type="FunFam" id="2.60.40.10:FF:000070">
    <property type="entry name" value="Myosin-binding protein C, slow type"/>
    <property type="match status" value="1"/>
</dbReference>
<dbReference type="FunFam" id="2.60.40.10:FF:000081">
    <property type="entry name" value="Myosin-binding protein C, slow type"/>
    <property type="match status" value="1"/>
</dbReference>
<dbReference type="FunFam" id="2.60.40.10:FF:000085">
    <property type="entry name" value="Myosin-binding protein C, slow type"/>
    <property type="match status" value="1"/>
</dbReference>
<dbReference type="FunFam" id="2.60.40.10:FF:000111">
    <property type="entry name" value="Myosin-binding protein C, slow type"/>
    <property type="match status" value="1"/>
</dbReference>
<dbReference type="Gene3D" id="2.60.40.10">
    <property type="entry name" value="Immunoglobulins"/>
    <property type="match status" value="11"/>
</dbReference>
<dbReference type="InterPro" id="IPR003961">
    <property type="entry name" value="FN3_dom"/>
</dbReference>
<dbReference type="InterPro" id="IPR036116">
    <property type="entry name" value="FN3_sf"/>
</dbReference>
<dbReference type="InterPro" id="IPR007110">
    <property type="entry name" value="Ig-like_dom"/>
</dbReference>
<dbReference type="InterPro" id="IPR036179">
    <property type="entry name" value="Ig-like_dom_sf"/>
</dbReference>
<dbReference type="InterPro" id="IPR013783">
    <property type="entry name" value="Ig-like_fold"/>
</dbReference>
<dbReference type="InterPro" id="IPR013098">
    <property type="entry name" value="Ig_I-set"/>
</dbReference>
<dbReference type="InterPro" id="IPR003599">
    <property type="entry name" value="Ig_sub"/>
</dbReference>
<dbReference type="InterPro" id="IPR003598">
    <property type="entry name" value="Ig_sub2"/>
</dbReference>
<dbReference type="InterPro" id="IPR040849">
    <property type="entry name" value="MyBP-C_THB"/>
</dbReference>
<dbReference type="InterPro" id="IPR050964">
    <property type="entry name" value="Striated_Muscle_Regulatory"/>
</dbReference>
<dbReference type="PANTHER" id="PTHR13817:SF20">
    <property type="entry name" value="MYOSIN-BINDING PROTEIN C, CARDIAC-TYPE"/>
    <property type="match status" value="1"/>
</dbReference>
<dbReference type="PANTHER" id="PTHR13817">
    <property type="entry name" value="TITIN"/>
    <property type="match status" value="1"/>
</dbReference>
<dbReference type="Pfam" id="PF00041">
    <property type="entry name" value="fn3"/>
    <property type="match status" value="3"/>
</dbReference>
<dbReference type="Pfam" id="PF07679">
    <property type="entry name" value="I-set"/>
    <property type="match status" value="8"/>
</dbReference>
<dbReference type="Pfam" id="PF18362">
    <property type="entry name" value="THB"/>
    <property type="match status" value="1"/>
</dbReference>
<dbReference type="SMART" id="SM00060">
    <property type="entry name" value="FN3"/>
    <property type="match status" value="3"/>
</dbReference>
<dbReference type="SMART" id="SM00409">
    <property type="entry name" value="IG"/>
    <property type="match status" value="8"/>
</dbReference>
<dbReference type="SMART" id="SM00408">
    <property type="entry name" value="IGc2"/>
    <property type="match status" value="6"/>
</dbReference>
<dbReference type="SUPFAM" id="SSF49265">
    <property type="entry name" value="Fibronectin type III"/>
    <property type="match status" value="2"/>
</dbReference>
<dbReference type="SUPFAM" id="SSF48726">
    <property type="entry name" value="Immunoglobulin"/>
    <property type="match status" value="8"/>
</dbReference>
<dbReference type="PROSITE" id="PS50853">
    <property type="entry name" value="FN3"/>
    <property type="match status" value="3"/>
</dbReference>
<dbReference type="PROSITE" id="PS50835">
    <property type="entry name" value="IG_LIKE"/>
    <property type="match status" value="6"/>
</dbReference>